<gene>
    <name type="primary">rpoA</name>
    <name type="synonym">pez</name>
    <name type="synonym">phs</name>
    <name type="synonym">sez</name>
    <name type="ordered locus">b3295</name>
    <name type="ordered locus">JW3257</name>
</gene>
<evidence type="ECO:0000269" key="1">
    <source>
    </source>
</evidence>
<evidence type="ECO:0000269" key="2">
    <source>
    </source>
</evidence>
<evidence type="ECO:0000269" key="3">
    <source>
    </source>
</evidence>
<evidence type="ECO:0000269" key="4">
    <source>
    </source>
</evidence>
<evidence type="ECO:0000269" key="5">
    <source>
    </source>
</evidence>
<evidence type="ECO:0000269" key="6">
    <source>
    </source>
</evidence>
<evidence type="ECO:0000269" key="7">
    <source>
    </source>
</evidence>
<evidence type="ECO:0000269" key="8">
    <source>
    </source>
</evidence>
<evidence type="ECO:0000269" key="9">
    <source>
    </source>
</evidence>
<evidence type="ECO:0000269" key="10">
    <source>
    </source>
</evidence>
<evidence type="ECO:0000269" key="11">
    <source>
    </source>
</evidence>
<evidence type="ECO:0000305" key="12"/>
<evidence type="ECO:0007744" key="13">
    <source>
        <dbReference type="PDB" id="3IYD"/>
    </source>
</evidence>
<evidence type="ECO:0007744" key="14">
    <source>
        <dbReference type="PDB" id="4MEX"/>
    </source>
</evidence>
<evidence type="ECO:0007744" key="15">
    <source>
        <dbReference type="PDB" id="4MEY"/>
    </source>
</evidence>
<evidence type="ECO:0007744" key="16">
    <source>
        <dbReference type="PDB" id="6TQN"/>
    </source>
</evidence>
<evidence type="ECO:0007744" key="17">
    <source>
        <dbReference type="PDB" id="6TQO"/>
    </source>
</evidence>
<evidence type="ECO:0007829" key="18">
    <source>
        <dbReference type="PDB" id="1XS9"/>
    </source>
</evidence>
<evidence type="ECO:0007829" key="19">
    <source>
        <dbReference type="PDB" id="3K4G"/>
    </source>
</evidence>
<evidence type="ECO:0007829" key="20">
    <source>
        <dbReference type="PDB" id="3N4M"/>
    </source>
</evidence>
<evidence type="ECO:0007829" key="21">
    <source>
        <dbReference type="PDB" id="6OUL"/>
    </source>
</evidence>
<evidence type="ECO:0007829" key="22">
    <source>
        <dbReference type="PDB" id="6XL5"/>
    </source>
</evidence>
<evidence type="ECO:0007829" key="23">
    <source>
        <dbReference type="PDB" id="7QV9"/>
    </source>
</evidence>
<evidence type="ECO:0007829" key="24">
    <source>
        <dbReference type="PDB" id="7QWP"/>
    </source>
</evidence>
<evidence type="ECO:0007829" key="25">
    <source>
        <dbReference type="PDB" id="8F1K"/>
    </source>
</evidence>
<evidence type="ECO:0007829" key="26">
    <source>
        <dbReference type="PDB" id="8FTD"/>
    </source>
</evidence>
<evidence type="ECO:0007829" key="27">
    <source>
        <dbReference type="PDB" id="8FVR"/>
    </source>
</evidence>
<evidence type="ECO:0007829" key="28">
    <source>
        <dbReference type="PDB" id="8FVW"/>
    </source>
</evidence>
<evidence type="ECO:0007829" key="29">
    <source>
        <dbReference type="PDB" id="8G00"/>
    </source>
</evidence>
<evidence type="ECO:0007829" key="30">
    <source>
        <dbReference type="PDB" id="8PBL"/>
    </source>
</evidence>
<evidence type="ECO:0007829" key="31">
    <source>
        <dbReference type="PDB" id="8PIB"/>
    </source>
</evidence>
<evidence type="ECO:0007829" key="32">
    <source>
        <dbReference type="PDB" id="8SY6"/>
    </source>
</evidence>
<sequence>MQGSVTEFLKPRLVDIEQVSSTHAKVTLEPLERGFGHTLGNALRRILLSSMPGCAVTEVEIDGVLHEYSTKEGVQEDILEILLNLKGLAVRVQGKDEVILTLNKSGIGPVTAADITHDGDVEIVKPQHVICHLTDENASISMRIKVQRGRGYVPASTRIHSEEDERPIGRLLVDACYSPVERIAYNVEAARVEQRTDLDKLVIEMETNGTIDPEEAIRRAATILAEQLEAFVDLRDVRQPEVKEEKPEFDPILLRPVDDLELTVRSANCLKAEAIHYIGDLVQRTEVELLKTPNLGKKSLTEIKDVLASRGLSLGMRLENWPPASIADE</sequence>
<name>RPOA_ECOLI</name>
<comment type="function">
    <text evidence="4 8">DNA-dependent RNA polymerase (RNAP) catalyzes the transcription of DNA into RNA using the four ribonucleoside triphosphates as substrates. This subunit plays an important role in subunit assembly since its dimerization is the first step in the sequential assembly of subunits to form the holoenzyme.</text>
</comment>
<comment type="function">
    <text evidence="9">Part of the processive rRNA transcription and antitermination complex (rrnTAC). The complex forms an RNA-chaperone ring around the RNA exit tunnel of RNAP. It supports rapid transcription and antitermination of rRNA operons, cotranscriptional rRNA folding, and annealing of distal rRNA regions to allow correct ribosome biogenesis.</text>
</comment>
<comment type="catalytic activity">
    <reaction>
        <text>RNA(n) + a ribonucleoside 5'-triphosphate = RNA(n+1) + diphosphate</text>
        <dbReference type="Rhea" id="RHEA:21248"/>
        <dbReference type="Rhea" id="RHEA-COMP:14527"/>
        <dbReference type="Rhea" id="RHEA-COMP:17342"/>
        <dbReference type="ChEBI" id="CHEBI:33019"/>
        <dbReference type="ChEBI" id="CHEBI:61557"/>
        <dbReference type="ChEBI" id="CHEBI:140395"/>
        <dbReference type="EC" id="2.7.7.6"/>
    </reaction>
</comment>
<comment type="subunit">
    <text evidence="2 4 5 7 8 9">Homodimer. The RNAP catalytic core consists of 2 alpha, 1 beta, 1 beta' and 1 omega subunit. When a sigma factor is associated with the core the holoenzyme is formed, which can initiate transcription. Both the N- and C-terminus interact with different regions of transcriptional regulator CRP. The rRNA transcription and antitermination complex (rrnTAC) consists of RNAP, NusA, NusB, NusE (rpsJ), NusG, SubB, ribosomal protein S4, DNA and precursor rRNA; S4 is more flexible than other subunits (PubMed:32871103).</text>
</comment>
<comment type="interaction">
    <interactant intactId="EBI-544985">
        <id>P0A7Z4</id>
    </interactant>
    <interactant intactId="EBI-548929">
        <id>P0ABQ0</id>
        <label>coaBC</label>
    </interactant>
    <organismsDiffer>false</organismsDiffer>
    <experiments>2</experiments>
</comment>
<comment type="interaction">
    <interactant intactId="EBI-544985">
        <id>P0A7Z4</id>
    </interactant>
    <interactant intactId="EBI-551571">
        <id>P0AFF6</id>
        <label>nusA</label>
    </interactant>
    <organismsDiffer>false</organismsDiffer>
    <experiments>7</experiments>
</comment>
<comment type="interaction">
    <interactant intactId="EBI-544985">
        <id>P0A7Z4</id>
    </interactant>
    <interactant intactId="EBI-543515">
        <id>P60422</id>
        <label>rplB</label>
    </interactant>
    <organismsDiffer>false</organismsDiffer>
    <experiments>6</experiments>
</comment>
<comment type="domain">
    <text evidence="4 7">The N-terminal domain is essential for RNAP assembly and basal transcription, whereas the C-terminal domain is involved in interaction with transcriptional regulators (such as CRP) and with upstream promoter elements.</text>
</comment>
<comment type="PTM">
    <text evidence="6">Acetylated on Lys-297 and Lys-298 in the presence of glucose. PatZ controls acetylation of Lys-298 but not of Lys-297.</text>
</comment>
<comment type="PTM">
    <text evidence="1 3">(Microbial infection) ADP-ribosylated on both alpha subunits by the phage T4 protein ModA (PubMed:10634320, PubMed:15489438). ADP-ribosylated on only one of the alpha subunits by the phage T4 protein Alt (PubMed:15489438).</text>
</comment>
<comment type="similarity">
    <text evidence="12">Belongs to the RNA polymerase alpha chain family.</text>
</comment>
<proteinExistence type="evidence at protein level"/>
<organism>
    <name type="scientific">Escherichia coli (strain K12)</name>
    <dbReference type="NCBI Taxonomy" id="83333"/>
    <lineage>
        <taxon>Bacteria</taxon>
        <taxon>Pseudomonadati</taxon>
        <taxon>Pseudomonadota</taxon>
        <taxon>Gammaproteobacteria</taxon>
        <taxon>Enterobacterales</taxon>
        <taxon>Enterobacteriaceae</taxon>
        <taxon>Escherichia</taxon>
    </lineage>
</organism>
<dbReference type="EC" id="2.7.7.6"/>
<dbReference type="EMBL" id="J01685">
    <property type="protein sequence ID" value="AAA24577.1"/>
    <property type="molecule type" value="Genomic_DNA"/>
</dbReference>
<dbReference type="EMBL" id="X00766">
    <property type="protein sequence ID" value="CAA25337.1"/>
    <property type="molecule type" value="Genomic_DNA"/>
</dbReference>
<dbReference type="EMBL" id="X02543">
    <property type="protein sequence ID" value="CAA26395.1"/>
    <property type="molecule type" value="Genomic_DNA"/>
</dbReference>
<dbReference type="EMBL" id="U18997">
    <property type="protein sequence ID" value="AAA58092.1"/>
    <property type="molecule type" value="Genomic_DNA"/>
</dbReference>
<dbReference type="EMBL" id="X53843">
    <property type="protein sequence ID" value="CAA37838.1"/>
    <property type="molecule type" value="Genomic_DNA"/>
</dbReference>
<dbReference type="EMBL" id="X53844">
    <property type="protein sequence ID" value="CAA37839.1"/>
    <property type="molecule type" value="Genomic_DNA"/>
</dbReference>
<dbReference type="EMBL" id="U00096">
    <property type="protein sequence ID" value="AAC76320.1"/>
    <property type="molecule type" value="Genomic_DNA"/>
</dbReference>
<dbReference type="EMBL" id="AP009048">
    <property type="protein sequence ID" value="BAE77996.1"/>
    <property type="molecule type" value="Genomic_DNA"/>
</dbReference>
<dbReference type="EMBL" id="V00353">
    <property type="protein sequence ID" value="CAA23646.1"/>
    <property type="molecule type" value="Genomic_DNA"/>
</dbReference>
<dbReference type="EMBL" id="M29822">
    <property type="protein sequence ID" value="AAA24590.1"/>
    <property type="molecule type" value="Genomic_DNA"/>
</dbReference>
<dbReference type="EMBL" id="M29823">
    <property type="protein sequence ID" value="AAA24592.1"/>
    <property type="molecule type" value="Genomic_DNA"/>
</dbReference>
<dbReference type="EMBL" id="M29824">
    <property type="protein sequence ID" value="AAA24594.1"/>
    <property type="molecule type" value="Genomic_DNA"/>
</dbReference>
<dbReference type="PIR" id="A22884">
    <property type="entry name" value="RNECA"/>
</dbReference>
<dbReference type="RefSeq" id="NP_417754.1">
    <property type="nucleotide sequence ID" value="NC_000913.3"/>
</dbReference>
<dbReference type="RefSeq" id="WP_001162094.1">
    <property type="nucleotide sequence ID" value="NZ_STEB01000038.1"/>
</dbReference>
<dbReference type="PDB" id="1BDF">
    <property type="method" value="X-ray"/>
    <property type="resolution" value="2.50 A"/>
    <property type="chains" value="A/B/C/D=1-235"/>
</dbReference>
<dbReference type="PDB" id="1COO">
    <property type="method" value="NMR"/>
    <property type="chains" value="A=233-329"/>
</dbReference>
<dbReference type="PDB" id="1LB2">
    <property type="method" value="X-ray"/>
    <property type="resolution" value="3.10 A"/>
    <property type="chains" value="B/E=246-329"/>
</dbReference>
<dbReference type="PDB" id="1XS9">
    <property type="method" value="NMR"/>
    <property type="chains" value="D=249-329"/>
</dbReference>
<dbReference type="PDB" id="3IYD">
    <property type="method" value="EM"/>
    <property type="chains" value="A/B=1-329"/>
</dbReference>
<dbReference type="PDB" id="3K4G">
    <property type="method" value="X-ray"/>
    <property type="resolution" value="2.05 A"/>
    <property type="chains" value="A/B/C/D/E/F/G/H=245-329"/>
</dbReference>
<dbReference type="PDB" id="3LU0">
    <property type="method" value="EM"/>
    <property type="chains" value="A/B=1-329"/>
</dbReference>
<dbReference type="PDB" id="3N4M">
    <property type="method" value="X-ray"/>
    <property type="resolution" value="2.99 A"/>
    <property type="chains" value="B/C=246-329"/>
</dbReference>
<dbReference type="PDB" id="3N97">
    <property type="method" value="X-ray"/>
    <property type="resolution" value="3.25 A"/>
    <property type="chains" value="B/C=246-329"/>
</dbReference>
<dbReference type="PDB" id="4JK1">
    <property type="method" value="X-ray"/>
    <property type="resolution" value="3.90 A"/>
    <property type="chains" value="A/B/F/G=1-329"/>
</dbReference>
<dbReference type="PDB" id="4JK2">
    <property type="method" value="X-ray"/>
    <property type="resolution" value="4.20 A"/>
    <property type="chains" value="A/B/F/G=1-329"/>
</dbReference>
<dbReference type="PDB" id="4KMU">
    <property type="method" value="X-ray"/>
    <property type="resolution" value="3.85 A"/>
    <property type="chains" value="A/B/F/G=1-329"/>
</dbReference>
<dbReference type="PDB" id="4KN4">
    <property type="method" value="X-ray"/>
    <property type="resolution" value="3.96 A"/>
    <property type="chains" value="A/B/F/G=1-329"/>
</dbReference>
<dbReference type="PDB" id="4KN7">
    <property type="method" value="X-ray"/>
    <property type="resolution" value="3.69 A"/>
    <property type="chains" value="A/B/F/G=1-329"/>
</dbReference>
<dbReference type="PDB" id="4MEX">
    <property type="method" value="X-ray"/>
    <property type="resolution" value="3.90 A"/>
    <property type="chains" value="A/B/G/H=1-329"/>
</dbReference>
<dbReference type="PDB" id="4MEY">
    <property type="method" value="X-ray"/>
    <property type="resolution" value="3.95 A"/>
    <property type="chains" value="A/B/G/H=1-329"/>
</dbReference>
<dbReference type="PDB" id="4S20">
    <property type="method" value="X-ray"/>
    <property type="resolution" value="4.70 A"/>
    <property type="chains" value="A/B/F/G=1-329"/>
</dbReference>
<dbReference type="PDB" id="4XSX">
    <property type="method" value="X-ray"/>
    <property type="resolution" value="3.71 A"/>
    <property type="chains" value="A/B/G/H=1-234"/>
</dbReference>
<dbReference type="PDB" id="4XSY">
    <property type="method" value="X-ray"/>
    <property type="resolution" value="4.01 A"/>
    <property type="chains" value="A/B/G/H=1-234"/>
</dbReference>
<dbReference type="PDB" id="4XSZ">
    <property type="method" value="X-ray"/>
    <property type="resolution" value="3.68 A"/>
    <property type="chains" value="A/B/G/H=1-234"/>
</dbReference>
<dbReference type="PDB" id="4YG2">
    <property type="method" value="X-ray"/>
    <property type="resolution" value="3.70 A"/>
    <property type="chains" value="A/B/G/H=1-329"/>
</dbReference>
<dbReference type="PDB" id="4YLN">
    <property type="method" value="X-ray"/>
    <property type="resolution" value="5.50 A"/>
    <property type="chains" value="A/B/G/H/M/N=1-235"/>
</dbReference>
<dbReference type="PDB" id="4YLO">
    <property type="method" value="X-ray"/>
    <property type="resolution" value="6.00 A"/>
    <property type="chains" value="A/B/G/H/M/N=1-235"/>
</dbReference>
<dbReference type="PDB" id="4YLP">
    <property type="method" value="X-ray"/>
    <property type="resolution" value="5.50 A"/>
    <property type="chains" value="A/B/G/H/M/N=1-235"/>
</dbReference>
<dbReference type="PDB" id="4ZH2">
    <property type="method" value="X-ray"/>
    <property type="resolution" value="4.20 A"/>
    <property type="chains" value="A/B/G/H=2-329"/>
</dbReference>
<dbReference type="PDB" id="4ZH3">
    <property type="method" value="X-ray"/>
    <property type="resolution" value="4.08 A"/>
    <property type="chains" value="A/B/G/H=2-329"/>
</dbReference>
<dbReference type="PDB" id="4ZH4">
    <property type="method" value="X-ray"/>
    <property type="resolution" value="3.99 A"/>
    <property type="chains" value="A/B/G/H=2-329"/>
</dbReference>
<dbReference type="PDB" id="5CIZ">
    <property type="method" value="X-ray"/>
    <property type="resolution" value="5.01 A"/>
    <property type="chains" value="B=246-329"/>
</dbReference>
<dbReference type="PDB" id="5EZK">
    <property type="method" value="X-ray"/>
    <property type="resolution" value="8.50 A"/>
    <property type="chains" value="A/B=1-329"/>
</dbReference>
<dbReference type="PDB" id="5IPL">
    <property type="method" value="X-ray"/>
    <property type="resolution" value="3.60 A"/>
    <property type="chains" value="A/B=1-235"/>
</dbReference>
<dbReference type="PDB" id="5IPM">
    <property type="method" value="X-ray"/>
    <property type="resolution" value="4.20 A"/>
    <property type="chains" value="A/B=1-235"/>
</dbReference>
<dbReference type="PDB" id="5IPN">
    <property type="method" value="X-ray"/>
    <property type="resolution" value="4.61 A"/>
    <property type="chains" value="A/B=1-235"/>
</dbReference>
<dbReference type="PDB" id="5MS0">
    <property type="method" value="EM"/>
    <property type="resolution" value="9.80 A"/>
    <property type="chains" value="A/B=1-329"/>
</dbReference>
<dbReference type="PDB" id="5MY1">
    <property type="method" value="EM"/>
    <property type="resolution" value="7.60 A"/>
    <property type="chains" value="V/W=1-329"/>
</dbReference>
<dbReference type="PDB" id="5NSR">
    <property type="method" value="EM"/>
    <property type="resolution" value="3.80 A"/>
    <property type="chains" value="A/B=1-329"/>
</dbReference>
<dbReference type="PDB" id="5NSS">
    <property type="method" value="EM"/>
    <property type="resolution" value="5.80 A"/>
    <property type="chains" value="A/B=1-329"/>
</dbReference>
<dbReference type="PDB" id="5NWT">
    <property type="method" value="X-ray"/>
    <property type="resolution" value="3.76 A"/>
    <property type="chains" value="A/B=1-329"/>
</dbReference>
<dbReference type="PDB" id="5UAC">
    <property type="method" value="X-ray"/>
    <property type="resolution" value="3.80 A"/>
    <property type="chains" value="A/B/G/H=1-329"/>
</dbReference>
<dbReference type="PDB" id="5UAG">
    <property type="method" value="X-ray"/>
    <property type="resolution" value="3.40 A"/>
    <property type="chains" value="A/B/G/H=1-320"/>
</dbReference>
<dbReference type="PDB" id="5UAH">
    <property type="method" value="X-ray"/>
    <property type="resolution" value="4.10 A"/>
    <property type="chains" value="A/B/G/H=1-329"/>
</dbReference>
<dbReference type="PDB" id="5UAJ">
    <property type="method" value="X-ray"/>
    <property type="resolution" value="3.92 A"/>
    <property type="chains" value="A/B/G/H=1-329"/>
</dbReference>
<dbReference type="PDB" id="5UAL">
    <property type="method" value="X-ray"/>
    <property type="resolution" value="3.89 A"/>
    <property type="chains" value="A/B/G/H=1-329"/>
</dbReference>
<dbReference type="PDB" id="5UAQ">
    <property type="method" value="X-ray"/>
    <property type="resolution" value="3.60 A"/>
    <property type="chains" value="A/B/G/H=1-329"/>
</dbReference>
<dbReference type="PDB" id="5UI8">
    <property type="method" value="X-ray"/>
    <property type="resolution" value="3.76 A"/>
    <property type="chains" value="G/H=1-329"/>
</dbReference>
<dbReference type="PDB" id="5VSW">
    <property type="method" value="X-ray"/>
    <property type="resolution" value="4.29 A"/>
    <property type="chains" value="A/B/G/H=1-329"/>
</dbReference>
<dbReference type="PDB" id="5VT0">
    <property type="method" value="EM"/>
    <property type="resolution" value="3.78 A"/>
    <property type="chains" value="G/H=1-234"/>
</dbReference>
<dbReference type="PDB" id="5W1S">
    <property type="method" value="X-ray"/>
    <property type="resolution" value="3.81 A"/>
    <property type="chains" value="A/B/G/H=1-329"/>
</dbReference>
<dbReference type="PDB" id="5W1T">
    <property type="method" value="X-ray"/>
    <property type="resolution" value="4.50 A"/>
    <property type="chains" value="A/B/G/H=1-329"/>
</dbReference>
<dbReference type="PDB" id="6ALF">
    <property type="method" value="EM"/>
    <property type="resolution" value="4.10 A"/>
    <property type="chains" value="G/H=1-234"/>
</dbReference>
<dbReference type="PDB" id="6ALG">
    <property type="method" value="EM"/>
    <property type="resolution" value="3.70 A"/>
    <property type="chains" value="G/H=1-234"/>
</dbReference>
<dbReference type="PDB" id="6ALH">
    <property type="method" value="EM"/>
    <property type="resolution" value="4.40 A"/>
    <property type="chains" value="G/H=1-234"/>
</dbReference>
<dbReference type="PDB" id="6ASX">
    <property type="method" value="EM"/>
    <property type="resolution" value="3.80 A"/>
    <property type="chains" value="G/H=1-234"/>
</dbReference>
<dbReference type="PDB" id="6AWB">
    <property type="method" value="EM"/>
    <property type="resolution" value="6.70 A"/>
    <property type="chains" value="01/02=6-234"/>
</dbReference>
<dbReference type="PDB" id="6AWC">
    <property type="method" value="EM"/>
    <property type="resolution" value="7.90 A"/>
    <property type="chains" value="01/02=6-234"/>
</dbReference>
<dbReference type="PDB" id="6AWD">
    <property type="method" value="EM"/>
    <property type="resolution" value="8.10 A"/>
    <property type="chains" value="01/02=6-234"/>
</dbReference>
<dbReference type="PDB" id="6BJS">
    <property type="method" value="EM"/>
    <property type="resolution" value="5.50 A"/>
    <property type="chains" value="G/H=1-234"/>
</dbReference>
<dbReference type="PDB" id="6BYU">
    <property type="method" value="X-ray"/>
    <property type="resolution" value="3.60 A"/>
    <property type="chains" value="A/B/G/H=1-329"/>
</dbReference>
<dbReference type="PDB" id="6C6S">
    <property type="method" value="EM"/>
    <property type="resolution" value="3.70 A"/>
    <property type="chains" value="G/H=1-234"/>
</dbReference>
<dbReference type="PDB" id="6C6T">
    <property type="method" value="EM"/>
    <property type="resolution" value="3.50 A"/>
    <property type="chains" value="G/H=1-234"/>
</dbReference>
<dbReference type="PDB" id="6C6U">
    <property type="method" value="EM"/>
    <property type="resolution" value="3.70 A"/>
    <property type="chains" value="G/H=1-234"/>
</dbReference>
<dbReference type="PDB" id="6C9Y">
    <property type="method" value="EM"/>
    <property type="resolution" value="4.25 A"/>
    <property type="chains" value="A/B=1-329"/>
</dbReference>
<dbReference type="PDB" id="6CA0">
    <property type="method" value="EM"/>
    <property type="resolution" value="5.75 A"/>
    <property type="chains" value="A/B=1-329"/>
</dbReference>
<dbReference type="PDB" id="6CUX">
    <property type="method" value="X-ray"/>
    <property type="resolution" value="4.10 A"/>
    <property type="chains" value="A/B/G/H=1-329"/>
</dbReference>
<dbReference type="PDB" id="6FLP">
    <property type="method" value="EM"/>
    <property type="resolution" value="4.10 A"/>
    <property type="chains" value="A/B=1-329"/>
</dbReference>
<dbReference type="PDB" id="6FLQ">
    <property type="method" value="EM"/>
    <property type="resolution" value="4.10 A"/>
    <property type="chains" value="A/B=1-329"/>
</dbReference>
<dbReference type="PDB" id="6GFW">
    <property type="method" value="EM"/>
    <property type="resolution" value="3.70 A"/>
    <property type="chains" value="A/B=1-329"/>
</dbReference>
<dbReference type="PDB" id="6GH5">
    <property type="method" value="EM"/>
    <property type="resolution" value="3.40 A"/>
    <property type="chains" value="A/B=1-329"/>
</dbReference>
<dbReference type="PDB" id="6GH6">
    <property type="method" value="EM"/>
    <property type="resolution" value="4.10 A"/>
    <property type="chains" value="A/B=1-329"/>
</dbReference>
<dbReference type="PDB" id="6GOV">
    <property type="method" value="EM"/>
    <property type="resolution" value="3.70 A"/>
    <property type="chains" value="U/V=1-329"/>
</dbReference>
<dbReference type="PDB" id="6JBQ">
    <property type="method" value="EM"/>
    <property type="resolution" value="4.02 A"/>
    <property type="chains" value="A/B=1-329"/>
</dbReference>
<dbReference type="PDB" id="6JNX">
    <property type="method" value="EM"/>
    <property type="resolution" value="4.08 A"/>
    <property type="chains" value="A/B=1-329"/>
</dbReference>
<dbReference type="PDB" id="6K4Y">
    <property type="method" value="EM"/>
    <property type="resolution" value="3.79 A"/>
    <property type="chains" value="A/B=1-329"/>
</dbReference>
<dbReference type="PDB" id="6KJ6">
    <property type="method" value="EM"/>
    <property type="resolution" value="3.80 A"/>
    <property type="chains" value="A/B=1-329"/>
</dbReference>
<dbReference type="PDB" id="6LDI">
    <property type="method" value="EM"/>
    <property type="resolution" value="3.69 A"/>
    <property type="chains" value="A/B=1-329"/>
</dbReference>
<dbReference type="PDB" id="6N4C">
    <property type="method" value="EM"/>
    <property type="resolution" value="17.00 A"/>
    <property type="chains" value="A=6-321, B=6-315"/>
</dbReference>
<dbReference type="PDB" id="6N57">
    <property type="method" value="EM"/>
    <property type="resolution" value="3.70 A"/>
    <property type="chains" value="G/H=1-329"/>
</dbReference>
<dbReference type="PDB" id="6N58">
    <property type="method" value="EM"/>
    <property type="resolution" value="3.78 A"/>
    <property type="chains" value="G/H=1-329"/>
</dbReference>
<dbReference type="PDB" id="6N60">
    <property type="method" value="X-ray"/>
    <property type="resolution" value="3.68 A"/>
    <property type="chains" value="A/B=1-234"/>
</dbReference>
<dbReference type="PDB" id="6N61">
    <property type="method" value="X-ray"/>
    <property type="resolution" value="3.25 A"/>
    <property type="chains" value="A/B=1-234"/>
</dbReference>
<dbReference type="PDB" id="6N62">
    <property type="method" value="X-ray"/>
    <property type="resolution" value="3.80 A"/>
    <property type="chains" value="A/B=1-234"/>
</dbReference>
<dbReference type="PDB" id="6OMF">
    <property type="method" value="EM"/>
    <property type="resolution" value="3.26 A"/>
    <property type="chains" value="A/B=1-234"/>
</dbReference>
<dbReference type="PDB" id="6OUL">
    <property type="method" value="EM"/>
    <property type="resolution" value="3.40 A"/>
    <property type="chains" value="G/H/R=1-329"/>
</dbReference>
<dbReference type="PDB" id="6P18">
    <property type="method" value="EM"/>
    <property type="resolution" value="3.50 A"/>
    <property type="chains" value="A/B=1-329"/>
</dbReference>
<dbReference type="PDB" id="6P19">
    <property type="method" value="EM"/>
    <property type="resolution" value="3.80 A"/>
    <property type="chains" value="A/B=1-329"/>
</dbReference>
<dbReference type="PDB" id="6P1K">
    <property type="method" value="EM"/>
    <property type="resolution" value="4.05 A"/>
    <property type="chains" value="G/H=1-329"/>
</dbReference>
<dbReference type="PDB" id="6PB4">
    <property type="method" value="EM"/>
    <property type="resolution" value="4.35 A"/>
    <property type="chains" value="A/B=1-329"/>
</dbReference>
<dbReference type="PDB" id="6PB5">
    <property type="method" value="EM"/>
    <property type="resolution" value="4.52 A"/>
    <property type="chains" value="A/B=1-329"/>
</dbReference>
<dbReference type="PDB" id="6PB6">
    <property type="method" value="EM"/>
    <property type="resolution" value="4.29 A"/>
    <property type="chains" value="A/B=1-329"/>
</dbReference>
<dbReference type="PDB" id="6PMI">
    <property type="method" value="EM"/>
    <property type="resolution" value="3.86 A"/>
    <property type="chains" value="A/B=1-329"/>
</dbReference>
<dbReference type="PDB" id="6PMJ">
    <property type="method" value="EM"/>
    <property type="resolution" value="3.91 A"/>
    <property type="chains" value="A/B=1-329"/>
</dbReference>
<dbReference type="PDB" id="6PSQ">
    <property type="method" value="EM"/>
    <property type="resolution" value="3.40 A"/>
    <property type="chains" value="G/H/M=1-329"/>
</dbReference>
<dbReference type="PDB" id="6PSR">
    <property type="method" value="EM"/>
    <property type="resolution" value="3.40 A"/>
    <property type="chains" value="G/H/M=1-329"/>
</dbReference>
<dbReference type="PDB" id="6PSS">
    <property type="method" value="EM"/>
    <property type="resolution" value="3.50 A"/>
    <property type="chains" value="G/H/M=1-329"/>
</dbReference>
<dbReference type="PDB" id="6PST">
    <property type="method" value="EM"/>
    <property type="resolution" value="3.00 A"/>
    <property type="chains" value="G/H/M=1-329"/>
</dbReference>
<dbReference type="PDB" id="6PSU">
    <property type="method" value="EM"/>
    <property type="resolution" value="3.90 A"/>
    <property type="chains" value="G/H/M=1-329"/>
</dbReference>
<dbReference type="PDB" id="6PSV">
    <property type="method" value="EM"/>
    <property type="resolution" value="3.50 A"/>
    <property type="chains" value="G/H/M=1-329"/>
</dbReference>
<dbReference type="PDB" id="6PSW">
    <property type="method" value="EM"/>
    <property type="resolution" value="3.70 A"/>
    <property type="chains" value="G/H/M=1-329"/>
</dbReference>
<dbReference type="PDB" id="6R9B">
    <property type="method" value="EM"/>
    <property type="resolution" value="3.80 A"/>
    <property type="chains" value="A/B=1-329"/>
</dbReference>
<dbReference type="PDB" id="6R9G">
    <property type="method" value="EM"/>
    <property type="resolution" value="3.70 A"/>
    <property type="chains" value="A/B=1-329"/>
</dbReference>
<dbReference type="PDB" id="6RH3">
    <property type="method" value="EM"/>
    <property type="resolution" value="3.60 A"/>
    <property type="chains" value="A/B=1-329"/>
</dbReference>
<dbReference type="PDB" id="6RI7">
    <property type="method" value="EM"/>
    <property type="resolution" value="3.90 A"/>
    <property type="chains" value="A/B=1-329"/>
</dbReference>
<dbReference type="PDB" id="6RI9">
    <property type="method" value="EM"/>
    <property type="resolution" value="3.70 A"/>
    <property type="chains" value="A/B=1-329"/>
</dbReference>
<dbReference type="PDB" id="6RIN">
    <property type="method" value="EM"/>
    <property type="resolution" value="3.70 A"/>
    <property type="chains" value="A/B=1-329"/>
</dbReference>
<dbReference type="PDB" id="6RIP">
    <property type="method" value="EM"/>
    <property type="resolution" value="3.40 A"/>
    <property type="chains" value="A/B=1-329"/>
</dbReference>
<dbReference type="PDB" id="6TQN">
    <property type="method" value="EM"/>
    <property type="resolution" value="3.80 A"/>
    <property type="chains" value="U/V=1-329"/>
</dbReference>
<dbReference type="PDB" id="6TQO">
    <property type="method" value="EM"/>
    <property type="resolution" value="3.80 A"/>
    <property type="chains" value="U/V=1-329"/>
</dbReference>
<dbReference type="PDB" id="6UTW">
    <property type="method" value="X-ray"/>
    <property type="resolution" value="3.85 A"/>
    <property type="chains" value="AAA/BBB=1-235"/>
</dbReference>
<dbReference type="PDB" id="6UTX">
    <property type="method" value="X-ray"/>
    <property type="resolution" value="4.05 A"/>
    <property type="chains" value="AAA/BBB=1-235"/>
</dbReference>
<dbReference type="PDB" id="6UTY">
    <property type="method" value="X-ray"/>
    <property type="resolution" value="4.15 A"/>
    <property type="chains" value="AAA/BBB=1-235"/>
</dbReference>
<dbReference type="PDB" id="6UTZ">
    <property type="method" value="X-ray"/>
    <property type="resolution" value="3.80 A"/>
    <property type="chains" value="AAA/BBB=1-235"/>
</dbReference>
<dbReference type="PDB" id="6UU0">
    <property type="method" value="X-ray"/>
    <property type="resolution" value="3.90 A"/>
    <property type="chains" value="AAA/BBB=1-235"/>
</dbReference>
<dbReference type="PDB" id="6UU1">
    <property type="method" value="X-ray"/>
    <property type="resolution" value="4.10 A"/>
    <property type="chains" value="AAA/BBB=1-235"/>
</dbReference>
<dbReference type="PDB" id="6UU2">
    <property type="method" value="X-ray"/>
    <property type="resolution" value="4.40 A"/>
    <property type="chains" value="AAA/BBB=1-235"/>
</dbReference>
<dbReference type="PDB" id="6UU3">
    <property type="method" value="X-ray"/>
    <property type="resolution" value="4.00 A"/>
    <property type="chains" value="AAA/BBB=1-235"/>
</dbReference>
<dbReference type="PDB" id="6UU4">
    <property type="method" value="X-ray"/>
    <property type="resolution" value="4.30 A"/>
    <property type="chains" value="AAA/BBB=1-235"/>
</dbReference>
<dbReference type="PDB" id="6UU5">
    <property type="method" value="X-ray"/>
    <property type="resolution" value="5.40 A"/>
    <property type="chains" value="AAA/BBB=1-235"/>
</dbReference>
<dbReference type="PDB" id="6UU6">
    <property type="method" value="X-ray"/>
    <property type="resolution" value="4.20 A"/>
    <property type="chains" value="AAA/BBB=1-235"/>
</dbReference>
<dbReference type="PDB" id="6UU7">
    <property type="method" value="X-ray"/>
    <property type="resolution" value="4.40 A"/>
    <property type="chains" value="AAA/BBB=1-235"/>
</dbReference>
<dbReference type="PDB" id="6UU8">
    <property type="method" value="X-ray"/>
    <property type="resolution" value="4.40 A"/>
    <property type="chains" value="AAA/BBB=1-235"/>
</dbReference>
<dbReference type="PDB" id="6UU9">
    <property type="method" value="X-ray"/>
    <property type="resolution" value="5.40 A"/>
    <property type="chains" value="AAA/BBB=1-235"/>
</dbReference>
<dbReference type="PDB" id="6UUA">
    <property type="method" value="X-ray"/>
    <property type="resolution" value="4.00 A"/>
    <property type="chains" value="AAA/BBB=1-235"/>
</dbReference>
<dbReference type="PDB" id="6UUB">
    <property type="method" value="X-ray"/>
    <property type="resolution" value="3.96 A"/>
    <property type="chains" value="AAA/BBB=1-235"/>
</dbReference>
<dbReference type="PDB" id="6UUC">
    <property type="method" value="X-ray"/>
    <property type="resolution" value="4.10 A"/>
    <property type="chains" value="AAA/BBB=1-235"/>
</dbReference>
<dbReference type="PDB" id="6VJS">
    <property type="method" value="X-ray"/>
    <property type="resolution" value="4.02 A"/>
    <property type="chains" value="A/B/F/G=1-329"/>
</dbReference>
<dbReference type="PDB" id="6VU3">
    <property type="method" value="EM"/>
    <property type="resolution" value="3.70 A"/>
    <property type="chains" value="AC/AD=6-235"/>
</dbReference>
<dbReference type="PDB" id="6VYQ">
    <property type="method" value="EM"/>
    <property type="resolution" value="3.70 A"/>
    <property type="chains" value="AC/AD=1-329"/>
</dbReference>
<dbReference type="PDB" id="6VYR">
    <property type="method" value="EM"/>
    <property type="resolution" value="3.80 A"/>
    <property type="chains" value="AC/AD=1-329"/>
</dbReference>
<dbReference type="PDB" id="6VYS">
    <property type="method" value="EM"/>
    <property type="resolution" value="3.70 A"/>
    <property type="chains" value="AC/AD=1-329"/>
</dbReference>
<dbReference type="PDB" id="6VYT">
    <property type="method" value="EM"/>
    <property type="resolution" value="14.00 A"/>
    <property type="chains" value="AC/AD=1-329"/>
</dbReference>
<dbReference type="PDB" id="6VYU">
    <property type="method" value="EM"/>
    <property type="resolution" value="7.00 A"/>
    <property type="chains" value="AC/AD=1-329"/>
</dbReference>
<dbReference type="PDB" id="6VYW">
    <property type="method" value="EM"/>
    <property type="resolution" value="7.00 A"/>
    <property type="chains" value="AC/AD=1-329"/>
</dbReference>
<dbReference type="PDB" id="6VYX">
    <property type="method" value="EM"/>
    <property type="resolution" value="9.90 A"/>
    <property type="chains" value="AC/AD=1-329"/>
</dbReference>
<dbReference type="PDB" id="6VYY">
    <property type="method" value="EM"/>
    <property type="resolution" value="9.90 A"/>
    <property type="chains" value="AC/AD=1-329"/>
</dbReference>
<dbReference type="PDB" id="6VYZ">
    <property type="method" value="EM"/>
    <property type="resolution" value="9.90 A"/>
    <property type="chains" value="AC/AD=1-329"/>
</dbReference>
<dbReference type="PDB" id="6VZ2">
    <property type="method" value="EM"/>
    <property type="resolution" value="10.00 A"/>
    <property type="chains" value="AC/AD=1-329"/>
</dbReference>
<dbReference type="PDB" id="6VZ3">
    <property type="method" value="EM"/>
    <property type="resolution" value="8.90 A"/>
    <property type="chains" value="AC/AD=6-235"/>
</dbReference>
<dbReference type="PDB" id="6VZ5">
    <property type="method" value="EM"/>
    <property type="resolution" value="8.90 A"/>
    <property type="chains" value="AC/AD=1-329"/>
</dbReference>
<dbReference type="PDB" id="6VZ7">
    <property type="method" value="EM"/>
    <property type="resolution" value="7.00 A"/>
    <property type="chains" value="AC/AD=6-235"/>
</dbReference>
<dbReference type="PDB" id="6VZJ">
    <property type="method" value="EM"/>
    <property type="resolution" value="4.10 A"/>
    <property type="chains" value="AC/AD=1-329"/>
</dbReference>
<dbReference type="PDB" id="6WMU">
    <property type="method" value="EM"/>
    <property type="resolution" value="3.18 A"/>
    <property type="chains" value="A/B=1-329"/>
</dbReference>
<dbReference type="PDB" id="6X26">
    <property type="method" value="EM"/>
    <property type="resolution" value="4.10 A"/>
    <property type="chains" value="G/H=1-329"/>
</dbReference>
<dbReference type="PDB" id="6X2F">
    <property type="method" value="EM"/>
    <property type="resolution" value="4.00 A"/>
    <property type="chains" value="G/H=1-329"/>
</dbReference>
<dbReference type="PDB" id="6X2N">
    <property type="method" value="EM"/>
    <property type="resolution" value="3.90 A"/>
    <property type="chains" value="G/H=1-329"/>
</dbReference>
<dbReference type="PDB" id="6X43">
    <property type="method" value="EM"/>
    <property type="resolution" value="3.60 A"/>
    <property type="chains" value="G/H=1-329"/>
</dbReference>
<dbReference type="PDB" id="6X4W">
    <property type="method" value="EM"/>
    <property type="resolution" value="3.80 A"/>
    <property type="chains" value="G/H=1-329"/>
</dbReference>
<dbReference type="PDB" id="6X4Y">
    <property type="method" value="EM"/>
    <property type="resolution" value="3.60 A"/>
    <property type="chains" value="G/H=1-329"/>
</dbReference>
<dbReference type="PDB" id="6X50">
    <property type="method" value="EM"/>
    <property type="resolution" value="3.30 A"/>
    <property type="chains" value="G/H=1-329"/>
</dbReference>
<dbReference type="PDB" id="6X6T">
    <property type="method" value="EM"/>
    <property type="resolution" value="3.20 A"/>
    <property type="chains" value="AC/AD=1-329"/>
</dbReference>
<dbReference type="PDB" id="6X7F">
    <property type="method" value="EM"/>
    <property type="resolution" value="3.50 A"/>
    <property type="chains" value="AC/AD=1-329"/>
</dbReference>
<dbReference type="PDB" id="6X7K">
    <property type="method" value="EM"/>
    <property type="resolution" value="3.10 A"/>
    <property type="chains" value="AC/AD=1-329"/>
</dbReference>
<dbReference type="PDB" id="6X9Q">
    <property type="method" value="EM"/>
    <property type="resolution" value="4.80 A"/>
    <property type="chains" value="AC/AD=1-329"/>
</dbReference>
<dbReference type="PDB" id="6XAS">
    <property type="method" value="EM"/>
    <property type="resolution" value="3.80 A"/>
    <property type="chains" value="H/K=1-329"/>
</dbReference>
<dbReference type="PDB" id="6XAV">
    <property type="method" value="EM"/>
    <property type="resolution" value="7.70 A"/>
    <property type="chains" value="H/K=1-329"/>
</dbReference>
<dbReference type="PDB" id="6XDQ">
    <property type="method" value="EM"/>
    <property type="resolution" value="3.70 A"/>
    <property type="chains" value="AC/AD=1-329"/>
</dbReference>
<dbReference type="PDB" id="6XDR">
    <property type="method" value="EM"/>
    <property type="resolution" value="4.70 A"/>
    <property type="chains" value="AC/AD=1-329"/>
</dbReference>
<dbReference type="PDB" id="6XGF">
    <property type="method" value="EM"/>
    <property type="resolution" value="5.00 A"/>
    <property type="chains" value="AC/AD=1-329"/>
</dbReference>
<dbReference type="PDB" id="6XH7">
    <property type="method" value="EM"/>
    <property type="resolution" value="3.90 A"/>
    <property type="chains" value="A/B=1-329"/>
</dbReference>
<dbReference type="PDB" id="6XH8">
    <property type="method" value="EM"/>
    <property type="resolution" value="4.10 A"/>
    <property type="chains" value="A/B=1-329"/>
</dbReference>
<dbReference type="PDB" id="6XII">
    <property type="method" value="EM"/>
    <property type="resolution" value="7.00 A"/>
    <property type="chains" value="AC/AD=1-329"/>
</dbReference>
<dbReference type="PDB" id="6XIJ">
    <property type="method" value="EM"/>
    <property type="resolution" value="8.00 A"/>
    <property type="chains" value="AC/AD=1-329"/>
</dbReference>
<dbReference type="PDB" id="6XL5">
    <property type="method" value="EM"/>
    <property type="resolution" value="2.50 A"/>
    <property type="chains" value="A/B=1-329"/>
</dbReference>
<dbReference type="PDB" id="6XL9">
    <property type="method" value="EM"/>
    <property type="resolution" value="2.50 A"/>
    <property type="chains" value="A/B=1-329"/>
</dbReference>
<dbReference type="PDB" id="6XLJ">
    <property type="method" value="EM"/>
    <property type="resolution" value="2.70 A"/>
    <property type="chains" value="A/B=1-329"/>
</dbReference>
<dbReference type="PDB" id="6XLL">
    <property type="method" value="EM"/>
    <property type="resolution" value="2.70 A"/>
    <property type="chains" value="A/B=1-329"/>
</dbReference>
<dbReference type="PDB" id="6XLM">
    <property type="method" value="EM"/>
    <property type="resolution" value="3.20 A"/>
    <property type="chains" value="A/B=1-329"/>
</dbReference>
<dbReference type="PDB" id="6XLN">
    <property type="method" value="EM"/>
    <property type="resolution" value="2.80 A"/>
    <property type="chains" value="A/B=1-329"/>
</dbReference>
<dbReference type="PDB" id="6Z9P">
    <property type="method" value="EM"/>
    <property type="resolution" value="3.90 A"/>
    <property type="chains" value="U/V=1-329"/>
</dbReference>
<dbReference type="PDB" id="6Z9Q">
    <property type="method" value="EM"/>
    <property type="resolution" value="5.70 A"/>
    <property type="chains" value="U/V=1-329"/>
</dbReference>
<dbReference type="PDB" id="6Z9R">
    <property type="method" value="EM"/>
    <property type="resolution" value="4.10 A"/>
    <property type="chains" value="U/V=1-329"/>
</dbReference>
<dbReference type="PDB" id="6Z9S">
    <property type="method" value="EM"/>
    <property type="resolution" value="4.40 A"/>
    <property type="chains" value="U/V=1-329"/>
</dbReference>
<dbReference type="PDB" id="6Z9T">
    <property type="method" value="EM"/>
    <property type="resolution" value="4.10 A"/>
    <property type="chains" value="U/V=1-329"/>
</dbReference>
<dbReference type="PDB" id="6ZTJ">
    <property type="method" value="EM"/>
    <property type="resolution" value="3.40 A"/>
    <property type="chains" value="CA/CB=1-329"/>
</dbReference>
<dbReference type="PDB" id="6ZTL">
    <property type="method" value="EM"/>
    <property type="resolution" value="3.50 A"/>
    <property type="chains" value="CA/CB=1-329"/>
</dbReference>
<dbReference type="PDB" id="6ZTM">
    <property type="method" value="EM"/>
    <property type="resolution" value="3.30 A"/>
    <property type="chains" value="CA/CB=1-329"/>
</dbReference>
<dbReference type="PDB" id="6ZTN">
    <property type="method" value="EM"/>
    <property type="resolution" value="3.90 A"/>
    <property type="chains" value="CA/CB=1-329"/>
</dbReference>
<dbReference type="PDB" id="6ZTO">
    <property type="method" value="EM"/>
    <property type="resolution" value="3.00 A"/>
    <property type="chains" value="CA/CB=1-329"/>
</dbReference>
<dbReference type="PDB" id="6ZTP">
    <property type="method" value="EM"/>
    <property type="resolution" value="3.00 A"/>
    <property type="chains" value="CA/CB=1-329"/>
</dbReference>
<dbReference type="PDB" id="6ZU1">
    <property type="method" value="EM"/>
    <property type="resolution" value="3.00 A"/>
    <property type="chains" value="CA/CB=1-329"/>
</dbReference>
<dbReference type="PDB" id="7ADB">
    <property type="method" value="EM"/>
    <property type="resolution" value="4.40 A"/>
    <property type="chains" value="U/V=1-329"/>
</dbReference>
<dbReference type="PDB" id="7ADC">
    <property type="method" value="EM"/>
    <property type="resolution" value="4.00 A"/>
    <property type="chains" value="U/V=1-329"/>
</dbReference>
<dbReference type="PDB" id="7ADD">
    <property type="method" value="EM"/>
    <property type="resolution" value="4.30 A"/>
    <property type="chains" value="U/V=1-329"/>
</dbReference>
<dbReference type="PDB" id="7ADE">
    <property type="method" value="EM"/>
    <property type="resolution" value="4.20 A"/>
    <property type="chains" value="U/V=1-329"/>
</dbReference>
<dbReference type="PDB" id="7BEF">
    <property type="method" value="EM"/>
    <property type="resolution" value="4.50 A"/>
    <property type="chains" value="A/B=1-329"/>
</dbReference>
<dbReference type="PDB" id="7BEG">
    <property type="method" value="EM"/>
    <property type="resolution" value="4.20 A"/>
    <property type="chains" value="A/B=1-329"/>
</dbReference>
<dbReference type="PDB" id="7C17">
    <property type="method" value="EM"/>
    <property type="resolution" value="4.22 A"/>
    <property type="chains" value="A/B=1-329"/>
</dbReference>
<dbReference type="PDB" id="7C97">
    <property type="method" value="EM"/>
    <property type="resolution" value="3.68 A"/>
    <property type="chains" value="A/B/K=1-329"/>
</dbReference>
<dbReference type="PDB" id="7CHW">
    <property type="method" value="EM"/>
    <property type="resolution" value="3.58 A"/>
    <property type="chains" value="A/B/K=1-329"/>
</dbReference>
<dbReference type="PDB" id="7DY6">
    <property type="method" value="EM"/>
    <property type="resolution" value="3.68 A"/>
    <property type="chains" value="A/B/K=1-329"/>
</dbReference>
<dbReference type="PDB" id="7KHB">
    <property type="method" value="EM"/>
    <property type="resolution" value="3.53 A"/>
    <property type="chains" value="A/B=1-329"/>
</dbReference>
<dbReference type="PDB" id="7KHC">
    <property type="method" value="EM"/>
    <property type="resolution" value="4.14 A"/>
    <property type="chains" value="A/B=1-329"/>
</dbReference>
<dbReference type="PDB" id="7KHE">
    <property type="method" value="EM"/>
    <property type="resolution" value="3.58 A"/>
    <property type="chains" value="A/B=1-236"/>
</dbReference>
<dbReference type="PDB" id="7KHI">
    <property type="method" value="EM"/>
    <property type="resolution" value="3.62 A"/>
    <property type="chains" value="A/B=1-236"/>
</dbReference>
<dbReference type="PDB" id="7M8E">
    <property type="method" value="EM"/>
    <property type="resolution" value="3.40 A"/>
    <property type="chains" value="A/B=1-329"/>
</dbReference>
<dbReference type="PDB" id="7MKD">
    <property type="method" value="EM"/>
    <property type="resolution" value="3.20 A"/>
    <property type="chains" value="G/H/R=1-329"/>
</dbReference>
<dbReference type="PDB" id="7MKE">
    <property type="method" value="EM"/>
    <property type="resolution" value="3.70 A"/>
    <property type="chains" value="G/H=1-329"/>
</dbReference>
<dbReference type="PDB" id="7MKI">
    <property type="method" value="EM"/>
    <property type="resolution" value="3.50 A"/>
    <property type="chains" value="G/H=1-329"/>
</dbReference>
<dbReference type="PDB" id="7MKJ">
    <property type="method" value="EM"/>
    <property type="resolution" value="2.90 A"/>
    <property type="chains" value="G/H/R=1-329"/>
</dbReference>
<dbReference type="PDB" id="7MKN">
    <property type="method" value="EM"/>
    <property type="resolution" value="3.30 A"/>
    <property type="chains" value="A/B=1-237"/>
</dbReference>
<dbReference type="PDB" id="7MKO">
    <property type="method" value="EM"/>
    <property type="resolution" value="3.15 A"/>
    <property type="chains" value="A/B=1-237"/>
</dbReference>
<dbReference type="PDB" id="7MKP">
    <property type="method" value="EM"/>
    <property type="resolution" value="3.41 A"/>
    <property type="chains" value="A/B=1-237"/>
</dbReference>
<dbReference type="PDB" id="7MKQ">
    <property type="method" value="EM"/>
    <property type="resolution" value="4.80 A"/>
    <property type="chains" value="A/B=1-237"/>
</dbReference>
<dbReference type="PDB" id="7N4E">
    <property type="method" value="EM"/>
    <property type="resolution" value="3.80 A"/>
    <property type="chains" value="A/B=1-329"/>
</dbReference>
<dbReference type="PDB" id="7PY0">
    <property type="method" value="EM"/>
    <property type="resolution" value="4.50 A"/>
    <property type="chains" value="A/B=1-329"/>
</dbReference>
<dbReference type="PDB" id="7PY1">
    <property type="method" value="EM"/>
    <property type="resolution" value="3.80 A"/>
    <property type="chains" value="A/B=1-329"/>
</dbReference>
<dbReference type="PDB" id="7PY3">
    <property type="method" value="EM"/>
    <property type="resolution" value="3.80 A"/>
    <property type="chains" value="A/B=1-329"/>
</dbReference>
<dbReference type="PDB" id="7PY5">
    <property type="method" value="EM"/>
    <property type="resolution" value="3.90 A"/>
    <property type="chains" value="A/B=1-329"/>
</dbReference>
<dbReference type="PDB" id="7PY6">
    <property type="method" value="EM"/>
    <property type="resolution" value="4.10 A"/>
    <property type="chains" value="A/B=1-329"/>
</dbReference>
<dbReference type="PDB" id="7PY7">
    <property type="method" value="EM"/>
    <property type="resolution" value="4.10 A"/>
    <property type="chains" value="A/B=1-329"/>
</dbReference>
<dbReference type="PDB" id="7PY8">
    <property type="method" value="EM"/>
    <property type="resolution" value="3.80 A"/>
    <property type="chains" value="A/B=1-329"/>
</dbReference>
<dbReference type="PDB" id="7PYJ">
    <property type="method" value="EM"/>
    <property type="resolution" value="4.20 A"/>
    <property type="chains" value="A/B=1-329"/>
</dbReference>
<dbReference type="PDB" id="7PYK">
    <property type="method" value="EM"/>
    <property type="resolution" value="4.10 A"/>
    <property type="chains" value="A/B=1-329"/>
</dbReference>
<dbReference type="PDB" id="7Q0J">
    <property type="method" value="EM"/>
    <property type="resolution" value="4.30 A"/>
    <property type="chains" value="A/B=1-329"/>
</dbReference>
<dbReference type="PDB" id="7Q0K">
    <property type="method" value="EM"/>
    <property type="resolution" value="4.00 A"/>
    <property type="chains" value="A/B=1-329"/>
</dbReference>
<dbReference type="PDB" id="7QV9">
    <property type="method" value="EM"/>
    <property type="resolution" value="3.50 A"/>
    <property type="chains" value="A/B=1-329"/>
</dbReference>
<dbReference type="PDB" id="7QWP">
    <property type="method" value="EM"/>
    <property type="resolution" value="3.40 A"/>
    <property type="chains" value="A/B=1-329"/>
</dbReference>
<dbReference type="PDB" id="7QXI">
    <property type="method" value="EM"/>
    <property type="resolution" value="3.40 A"/>
    <property type="chains" value="A/B=1-329"/>
</dbReference>
<dbReference type="PDB" id="7SZJ">
    <property type="method" value="EM"/>
    <property type="resolution" value="3.11 A"/>
    <property type="chains" value="A/B=1-329"/>
</dbReference>
<dbReference type="PDB" id="7SZK">
    <property type="method" value="EM"/>
    <property type="resolution" value="2.94 A"/>
    <property type="chains" value="A/B=1-329"/>
</dbReference>
<dbReference type="PDB" id="7UBM">
    <property type="method" value="EM"/>
    <property type="resolution" value="3.13 A"/>
    <property type="chains" value="A/B=1-329"/>
</dbReference>
<dbReference type="PDB" id="7UBN">
    <property type="method" value="EM"/>
    <property type="resolution" value="3.36 A"/>
    <property type="chains" value="A/B=1-329"/>
</dbReference>
<dbReference type="PDB" id="7UWE">
    <property type="method" value="EM"/>
    <property type="resolution" value="2.90 A"/>
    <property type="chains" value="G/H=1-329"/>
</dbReference>
<dbReference type="PDB" id="7UWH">
    <property type="method" value="EM"/>
    <property type="resolution" value="3.10 A"/>
    <property type="chains" value="G/H=1-329"/>
</dbReference>
<dbReference type="PDB" id="7VWY">
    <property type="method" value="EM"/>
    <property type="resolution" value="4.57 A"/>
    <property type="chains" value="A/B=1-329"/>
</dbReference>
<dbReference type="PDB" id="7VWZ">
    <property type="method" value="EM"/>
    <property type="resolution" value="4.00 A"/>
    <property type="chains" value="A/B=1-329"/>
</dbReference>
<dbReference type="PDB" id="7W5W">
    <property type="method" value="EM"/>
    <property type="resolution" value="4.55 A"/>
    <property type="chains" value="A/B=1-329"/>
</dbReference>
<dbReference type="PDB" id="7W5X">
    <property type="method" value="EM"/>
    <property type="resolution" value="3.40 A"/>
    <property type="chains" value="A/B=1-329"/>
</dbReference>
<dbReference type="PDB" id="7W5Y">
    <property type="method" value="EM"/>
    <property type="resolution" value="4.20 A"/>
    <property type="chains" value="A/B=1-329"/>
</dbReference>
<dbReference type="PDB" id="7XUE">
    <property type="method" value="EM"/>
    <property type="resolution" value="3.17 A"/>
    <property type="chains" value="G/H=1-329"/>
</dbReference>
<dbReference type="PDB" id="7XUG">
    <property type="method" value="EM"/>
    <property type="resolution" value="3.57 A"/>
    <property type="chains" value="G/H=1-329"/>
</dbReference>
<dbReference type="PDB" id="7XUI">
    <property type="method" value="EM"/>
    <property type="resolution" value="3.61 A"/>
    <property type="chains" value="G/H=1-329"/>
</dbReference>
<dbReference type="PDB" id="7YP9">
    <property type="method" value="EM"/>
    <property type="resolution" value="3.58 A"/>
    <property type="chains" value="A/B=1-329"/>
</dbReference>
<dbReference type="PDB" id="7YPA">
    <property type="method" value="EM"/>
    <property type="resolution" value="3.05 A"/>
    <property type="chains" value="A/B=1-329"/>
</dbReference>
<dbReference type="PDB" id="7YPB">
    <property type="method" value="EM"/>
    <property type="resolution" value="3.48 A"/>
    <property type="chains" value="A/B=1-329"/>
</dbReference>
<dbReference type="PDB" id="8ABY">
    <property type="method" value="EM"/>
    <property type="resolution" value="3.70 A"/>
    <property type="chains" value="A/B=1-329"/>
</dbReference>
<dbReference type="PDB" id="8ABZ">
    <property type="method" value="EM"/>
    <property type="resolution" value="3.40 A"/>
    <property type="chains" value="A/B=1-329"/>
</dbReference>
<dbReference type="PDB" id="8AC0">
    <property type="method" value="EM"/>
    <property type="resolution" value="4.10 A"/>
    <property type="chains" value="A/B=1-329"/>
</dbReference>
<dbReference type="PDB" id="8AC1">
    <property type="method" value="EM"/>
    <property type="resolution" value="4.06 A"/>
    <property type="chains" value="A/B=1-329"/>
</dbReference>
<dbReference type="PDB" id="8AC2">
    <property type="method" value="EM"/>
    <property type="resolution" value="3.70 A"/>
    <property type="chains" value="A/B=1-329"/>
</dbReference>
<dbReference type="PDB" id="8ACP">
    <property type="method" value="EM"/>
    <property type="resolution" value="4.50 A"/>
    <property type="chains" value="A/B=1-329"/>
</dbReference>
<dbReference type="PDB" id="8AD1">
    <property type="method" value="EM"/>
    <property type="resolution" value="4.10 A"/>
    <property type="chains" value="A/B=1-329"/>
</dbReference>
<dbReference type="PDB" id="8E3F">
    <property type="method" value="EM"/>
    <property type="resolution" value="6.50 A"/>
    <property type="chains" value="C/D=1-329"/>
</dbReference>
<dbReference type="PDB" id="8E5K">
    <property type="method" value="EM"/>
    <property type="resolution" value="4.20 A"/>
    <property type="chains" value="C/D=1-329"/>
</dbReference>
<dbReference type="PDB" id="8E5O">
    <property type="method" value="EM"/>
    <property type="resolution" value="4.40 A"/>
    <property type="chains" value="C/D=1-329"/>
</dbReference>
<dbReference type="PDB" id="8E6X">
    <property type="method" value="EM"/>
    <property type="resolution" value="4.27 A"/>
    <property type="chains" value="C/D=1-329"/>
</dbReference>
<dbReference type="PDB" id="8E6Z">
    <property type="method" value="EM"/>
    <property type="resolution" value="4.10 A"/>
    <property type="chains" value="C/D=1-329"/>
</dbReference>
<dbReference type="PDB" id="8EG7">
    <property type="method" value="EM"/>
    <property type="resolution" value="3.20 A"/>
    <property type="chains" value="G/H=1-234"/>
</dbReference>
<dbReference type="PDB" id="8EG8">
    <property type="method" value="EM"/>
    <property type="resolution" value="3.30 A"/>
    <property type="chains" value="G/H=1-234"/>
</dbReference>
<dbReference type="PDB" id="8EGB">
    <property type="method" value="EM"/>
    <property type="resolution" value="3.80 A"/>
    <property type="chains" value="G/H=1-234"/>
</dbReference>
<dbReference type="PDB" id="8EH8">
    <property type="method" value="EM"/>
    <property type="resolution" value="3.40 A"/>
    <property type="chains" value="G/H=1-234"/>
</dbReference>
<dbReference type="PDB" id="8EH9">
    <property type="method" value="EM"/>
    <property type="resolution" value="3.90 A"/>
    <property type="chains" value="G/H=1-234"/>
</dbReference>
<dbReference type="PDB" id="8EHA">
    <property type="method" value="EM"/>
    <property type="resolution" value="3.70 A"/>
    <property type="chains" value="G/H=1-234"/>
</dbReference>
<dbReference type="PDB" id="8EHF">
    <property type="method" value="EM"/>
    <property type="resolution" value="3.30 A"/>
    <property type="chains" value="G/H=1-234"/>
</dbReference>
<dbReference type="PDB" id="8EHI">
    <property type="method" value="EM"/>
    <property type="resolution" value="5.50 A"/>
    <property type="chains" value="G/H=1-234"/>
</dbReference>
<dbReference type="PDB" id="8F1I">
    <property type="method" value="EM"/>
    <property type="resolution" value="3.00 A"/>
    <property type="chains" value="G/H=1-329"/>
</dbReference>
<dbReference type="PDB" id="8F1J">
    <property type="method" value="EM"/>
    <property type="resolution" value="2.60 A"/>
    <property type="chains" value="G/H=1-329"/>
</dbReference>
<dbReference type="PDB" id="8F1K">
    <property type="method" value="EM"/>
    <property type="resolution" value="2.80 A"/>
    <property type="chains" value="G/H=1-329"/>
</dbReference>
<dbReference type="PDB" id="8F3C">
    <property type="method" value="EM"/>
    <property type="resolution" value="3.40 A"/>
    <property type="chains" value="G/H=1-328"/>
</dbReference>
<dbReference type="PDB" id="8FIX">
    <property type="method" value="EM"/>
    <property type="resolution" value="3.90 A"/>
    <property type="chains" value="A/B=1-329"/>
</dbReference>
<dbReference type="PDB" id="8FIY">
    <property type="method" value="EM"/>
    <property type="resolution" value="7.30 A"/>
    <property type="chains" value="A/B=1-329"/>
</dbReference>
<dbReference type="PDB" id="8FTD">
    <property type="method" value="EM"/>
    <property type="resolution" value="2.76 A"/>
    <property type="chains" value="G/H/R=1-329"/>
</dbReference>
<dbReference type="PDB" id="8FVR">
    <property type="method" value="EM"/>
    <property type="resolution" value="2.42 A"/>
    <property type="chains" value="D/E=1-329"/>
</dbReference>
<dbReference type="PDB" id="8FVW">
    <property type="method" value="EM"/>
    <property type="resolution" value="2.10 A"/>
    <property type="chains" value="D/E=1-329"/>
</dbReference>
<dbReference type="PDB" id="8G00">
    <property type="method" value="EM"/>
    <property type="resolution" value="3.40 A"/>
    <property type="chains" value="G=1-235, H=1-239"/>
</dbReference>
<dbReference type="PDB" id="8G1S">
    <property type="method" value="EM"/>
    <property type="resolution" value="3.70 A"/>
    <property type="chains" value="G/H=1-235"/>
</dbReference>
<dbReference type="PDB" id="8G2W">
    <property type="method" value="EM"/>
    <property type="resolution" value="3.70 A"/>
    <property type="chains" value="G/H=1-234"/>
</dbReference>
<dbReference type="PDB" id="8G4W">
    <property type="method" value="EM"/>
    <property type="resolution" value="3.80 A"/>
    <property type="chains" value="G/H=1-234"/>
</dbReference>
<dbReference type="PDB" id="8G7E">
    <property type="method" value="EM"/>
    <property type="resolution" value="3.90 A"/>
    <property type="chains" value="G/H=1-234"/>
</dbReference>
<dbReference type="PDB" id="8G8Z">
    <property type="method" value="EM"/>
    <property type="resolution" value="4.30 A"/>
    <property type="chains" value="G/H=1-234"/>
</dbReference>
<dbReference type="PDB" id="8HKC">
    <property type="method" value="EM"/>
    <property type="resolution" value="2.49 A"/>
    <property type="chains" value="A/B=1-329"/>
</dbReference>
<dbReference type="PDB" id="8IGR">
    <property type="method" value="EM"/>
    <property type="resolution" value="3.10 A"/>
    <property type="chains" value="G/H=1-329"/>
</dbReference>
<dbReference type="PDB" id="8IGS">
    <property type="method" value="EM"/>
    <property type="resolution" value="3.40 A"/>
    <property type="chains" value="H=1-329"/>
</dbReference>
<dbReference type="PDB" id="8JO2">
    <property type="method" value="EM"/>
    <property type="resolution" value="2.74 A"/>
    <property type="chains" value="A/B=1-329"/>
</dbReference>
<dbReference type="PDB" id="8K58">
    <property type="method" value="EM"/>
    <property type="resolution" value="3.15 A"/>
    <property type="chains" value="A/B=6-236"/>
</dbReference>
<dbReference type="PDB" id="8K59">
    <property type="method" value="EM"/>
    <property type="resolution" value="3.50 A"/>
    <property type="chains" value="A/B=7-236"/>
</dbReference>
<dbReference type="PDB" id="8K5A">
    <property type="method" value="EM"/>
    <property type="resolution" value="3.30 A"/>
    <property type="chains" value="A/B=6-236"/>
</dbReference>
<dbReference type="PDB" id="8PBL">
    <property type="method" value="EM"/>
    <property type="resolution" value="2.87 A"/>
    <property type="chains" value="D/E=1-235"/>
</dbReference>
<dbReference type="PDB" id="8PDY">
    <property type="method" value="EM"/>
    <property type="resolution" value="2.80 A"/>
    <property type="chains" value="G/H=1-329"/>
</dbReference>
<dbReference type="PDB" id="8PEN">
    <property type="method" value="EM"/>
    <property type="resolution" value="3.10 A"/>
    <property type="chains" value="G/H=1-329"/>
</dbReference>
<dbReference type="PDB" id="8PFG">
    <property type="method" value="EM"/>
    <property type="resolution" value="3.10 A"/>
    <property type="chains" value="G/H=1-329"/>
</dbReference>
<dbReference type="PDB" id="8PFJ">
    <property type="method" value="EM"/>
    <property type="resolution" value="3.40 A"/>
    <property type="chains" value="G/H=1-329"/>
</dbReference>
<dbReference type="PDB" id="8PH9">
    <property type="method" value="EM"/>
    <property type="resolution" value="3.00 A"/>
    <property type="chains" value="G/H=1-329"/>
</dbReference>
<dbReference type="PDB" id="8PHK">
    <property type="method" value="EM"/>
    <property type="resolution" value="3.10 A"/>
    <property type="chains" value="G/H=1-329"/>
</dbReference>
<dbReference type="PDB" id="8PIB">
    <property type="method" value="EM"/>
    <property type="resolution" value="2.60 A"/>
    <property type="chains" value="G/H=1-329"/>
</dbReference>
<dbReference type="PDB" id="8PID">
    <property type="method" value="EM"/>
    <property type="resolution" value="3.00 A"/>
    <property type="chains" value="G/H=1-329"/>
</dbReference>
<dbReference type="PDB" id="8PIL">
    <property type="method" value="EM"/>
    <property type="resolution" value="3.20 A"/>
    <property type="chains" value="G/H=1-329"/>
</dbReference>
<dbReference type="PDB" id="8PIM">
    <property type="method" value="EM"/>
    <property type="resolution" value="3.40 A"/>
    <property type="chains" value="G/H=1-329"/>
</dbReference>
<dbReference type="PDB" id="8RE4">
    <property type="method" value="EM"/>
    <property type="resolution" value="2.80 A"/>
    <property type="chains" value="A/B=4-324"/>
</dbReference>
<dbReference type="PDB" id="8REA">
    <property type="method" value="EM"/>
    <property type="resolution" value="3.40 A"/>
    <property type="chains" value="A/B=4-324"/>
</dbReference>
<dbReference type="PDB" id="8REB">
    <property type="method" value="EM"/>
    <property type="resolution" value="3.40 A"/>
    <property type="chains" value="A/B=4-324"/>
</dbReference>
<dbReference type="PDB" id="8REC">
    <property type="method" value="EM"/>
    <property type="resolution" value="3.50 A"/>
    <property type="chains" value="A/B=4-324"/>
</dbReference>
<dbReference type="PDB" id="8RED">
    <property type="method" value="EM"/>
    <property type="resolution" value="3.90 A"/>
    <property type="chains" value="A/B=4-324"/>
</dbReference>
<dbReference type="PDB" id="8REE">
    <property type="method" value="EM"/>
    <property type="resolution" value="3.80 A"/>
    <property type="chains" value="A/B=4-324"/>
</dbReference>
<dbReference type="PDB" id="8SY5">
    <property type="method" value="EM"/>
    <property type="resolution" value="2.70 A"/>
    <property type="chains" value="A/G=1-329"/>
</dbReference>
<dbReference type="PDB" id="8SY6">
    <property type="method" value="EM"/>
    <property type="resolution" value="3.28 A"/>
    <property type="chains" value="A/G=1-329"/>
</dbReference>
<dbReference type="PDB" id="8SY7">
    <property type="method" value="EM"/>
    <property type="resolution" value="2.65 A"/>
    <property type="chains" value="A/G=1-329"/>
</dbReference>
<dbReference type="PDB" id="8TO1">
    <property type="method" value="EM"/>
    <property type="resolution" value="2.80 A"/>
    <property type="chains" value="G/H/M=1-329"/>
</dbReference>
<dbReference type="PDB" id="8TO6">
    <property type="method" value="EM"/>
    <property type="resolution" value="2.90 A"/>
    <property type="chains" value="G/H/M=1-329"/>
</dbReference>
<dbReference type="PDB" id="8TO8">
    <property type="method" value="EM"/>
    <property type="resolution" value="2.90 A"/>
    <property type="chains" value="G/H/M=1-329"/>
</dbReference>
<dbReference type="PDB" id="8TOE">
    <property type="method" value="EM"/>
    <property type="resolution" value="2.90 A"/>
    <property type="chains" value="G/H/M=1-329"/>
</dbReference>
<dbReference type="PDB" id="8TOM">
    <property type="method" value="EM"/>
    <property type="resolution" value="3.10 A"/>
    <property type="chains" value="G/H/M=1-329"/>
</dbReference>
<dbReference type="PDB" id="8TXO">
    <property type="method" value="EM"/>
    <property type="resolution" value="3.10 A"/>
    <property type="chains" value="A/G=1-329"/>
</dbReference>
<dbReference type="PDB" id="8U3B">
    <property type="method" value="EM"/>
    <property type="resolution" value="3.23 A"/>
    <property type="chains" value="A/B=1-329"/>
</dbReference>
<dbReference type="PDB" id="8UPO">
    <property type="method" value="EM"/>
    <property type="resolution" value="5.50 A"/>
    <property type="chains" value="AC/AD=1-329"/>
</dbReference>
<dbReference type="PDB" id="8UPR">
    <property type="method" value="EM"/>
    <property type="resolution" value="5.30 A"/>
    <property type="chains" value="AC/AD=1-329"/>
</dbReference>
<dbReference type="PDB" id="8UQL">
    <property type="method" value="EM"/>
    <property type="resolution" value="3.20 A"/>
    <property type="chains" value="AC/AD=1-329"/>
</dbReference>
<dbReference type="PDB" id="8UQM">
    <property type="method" value="EM"/>
    <property type="resolution" value="5.30 A"/>
    <property type="chains" value="AC/AD=1-329"/>
</dbReference>
<dbReference type="PDB" id="8UQP">
    <property type="method" value="EM"/>
    <property type="resolution" value="3.80 A"/>
    <property type="chains" value="AC/AD=1-329"/>
</dbReference>
<dbReference type="PDB" id="8UR0">
    <property type="method" value="EM"/>
    <property type="resolution" value="3.40 A"/>
    <property type="chains" value="AC/AD=1-329"/>
</dbReference>
<dbReference type="PDB" id="8URH">
    <property type="method" value="EM"/>
    <property type="resolution" value="5.70 A"/>
    <property type="chains" value="AC/AD=1-329"/>
</dbReference>
<dbReference type="PDB" id="8URI">
    <property type="method" value="EM"/>
    <property type="resolution" value="5.30 A"/>
    <property type="chains" value="AC/AD=1-329"/>
</dbReference>
<dbReference type="PDB" id="8URX">
    <property type="method" value="EM"/>
    <property type="resolution" value="6.60 A"/>
    <property type="chains" value="AC/AD=1-329"/>
</dbReference>
<dbReference type="PDB" id="8URY">
    <property type="method" value="EM"/>
    <property type="resolution" value="3.10 A"/>
    <property type="chains" value="AC/AD=1-329"/>
</dbReference>
<dbReference type="PDB" id="8Y6U">
    <property type="method" value="EM"/>
    <property type="resolution" value="3.97 A"/>
    <property type="chains" value="A/B/I=1-329"/>
</dbReference>
<dbReference type="PDB" id="9DR1">
    <property type="method" value="EM"/>
    <property type="resolution" value="3.70 A"/>
    <property type="chains" value="G/H=5-234"/>
</dbReference>
<dbReference type="PDB" id="9GUW">
    <property type="method" value="EM"/>
    <property type="resolution" value="3.10 A"/>
    <property type="chains" value="1/2=1-329"/>
</dbReference>
<dbReference type="PDB" id="9GUX">
    <property type="method" value="EM"/>
    <property type="resolution" value="3.30 A"/>
    <property type="chains" value="1/2=1-329"/>
</dbReference>
<dbReference type="PDB" id="9Q96">
    <property type="method" value="EM"/>
    <property type="resolution" value="4.60 A"/>
    <property type="chains" value="A/B=1-329"/>
</dbReference>
<dbReference type="PDBsum" id="1BDF"/>
<dbReference type="PDBsum" id="1COO"/>
<dbReference type="PDBsum" id="1LB2"/>
<dbReference type="PDBsum" id="1XS9"/>
<dbReference type="PDBsum" id="3IYD"/>
<dbReference type="PDBsum" id="3K4G"/>
<dbReference type="PDBsum" id="3LU0"/>
<dbReference type="PDBsum" id="3N4M"/>
<dbReference type="PDBsum" id="3N97"/>
<dbReference type="PDBsum" id="4JK1"/>
<dbReference type="PDBsum" id="4JK2"/>
<dbReference type="PDBsum" id="4KMU"/>
<dbReference type="PDBsum" id="4KN4"/>
<dbReference type="PDBsum" id="4KN7"/>
<dbReference type="PDBsum" id="4MEX"/>
<dbReference type="PDBsum" id="4MEY"/>
<dbReference type="PDBsum" id="4S20"/>
<dbReference type="PDBsum" id="4XSX"/>
<dbReference type="PDBsum" id="4XSY"/>
<dbReference type="PDBsum" id="4XSZ"/>
<dbReference type="PDBsum" id="4YG2"/>
<dbReference type="PDBsum" id="4YLN"/>
<dbReference type="PDBsum" id="4YLO"/>
<dbReference type="PDBsum" id="4YLP"/>
<dbReference type="PDBsum" id="4ZH2"/>
<dbReference type="PDBsum" id="4ZH3"/>
<dbReference type="PDBsum" id="4ZH4"/>
<dbReference type="PDBsum" id="5CIZ"/>
<dbReference type="PDBsum" id="5EZK"/>
<dbReference type="PDBsum" id="5IPL"/>
<dbReference type="PDBsum" id="5IPM"/>
<dbReference type="PDBsum" id="5IPN"/>
<dbReference type="PDBsum" id="5MS0"/>
<dbReference type="PDBsum" id="5MY1"/>
<dbReference type="PDBsum" id="5NSR"/>
<dbReference type="PDBsum" id="5NSS"/>
<dbReference type="PDBsum" id="5NWT"/>
<dbReference type="PDBsum" id="5UAC"/>
<dbReference type="PDBsum" id="5UAG"/>
<dbReference type="PDBsum" id="5UAH"/>
<dbReference type="PDBsum" id="5UAJ"/>
<dbReference type="PDBsum" id="5UAL"/>
<dbReference type="PDBsum" id="5UAQ"/>
<dbReference type="PDBsum" id="5UI8"/>
<dbReference type="PDBsum" id="5VSW"/>
<dbReference type="PDBsum" id="5VT0"/>
<dbReference type="PDBsum" id="5W1S"/>
<dbReference type="PDBsum" id="5W1T"/>
<dbReference type="PDBsum" id="6ALF"/>
<dbReference type="PDBsum" id="6ALG"/>
<dbReference type="PDBsum" id="6ALH"/>
<dbReference type="PDBsum" id="6ASX"/>
<dbReference type="PDBsum" id="6AWB"/>
<dbReference type="PDBsum" id="6AWC"/>
<dbReference type="PDBsum" id="6AWD"/>
<dbReference type="PDBsum" id="6BJS"/>
<dbReference type="PDBsum" id="6BYU"/>
<dbReference type="PDBsum" id="6C6S"/>
<dbReference type="PDBsum" id="6C6T"/>
<dbReference type="PDBsum" id="6C6U"/>
<dbReference type="PDBsum" id="6C9Y"/>
<dbReference type="PDBsum" id="6CA0"/>
<dbReference type="PDBsum" id="6CUX"/>
<dbReference type="PDBsum" id="6FLP"/>
<dbReference type="PDBsum" id="6FLQ"/>
<dbReference type="PDBsum" id="6GFW"/>
<dbReference type="PDBsum" id="6GH5"/>
<dbReference type="PDBsum" id="6GH6"/>
<dbReference type="PDBsum" id="6GOV"/>
<dbReference type="PDBsum" id="6JBQ"/>
<dbReference type="PDBsum" id="6JNX"/>
<dbReference type="PDBsum" id="6K4Y"/>
<dbReference type="PDBsum" id="6KJ6"/>
<dbReference type="PDBsum" id="6LDI"/>
<dbReference type="PDBsum" id="6N4C"/>
<dbReference type="PDBsum" id="6N57"/>
<dbReference type="PDBsum" id="6N58"/>
<dbReference type="PDBsum" id="6N60"/>
<dbReference type="PDBsum" id="6N61"/>
<dbReference type="PDBsum" id="6N62"/>
<dbReference type="PDBsum" id="6OMF"/>
<dbReference type="PDBsum" id="6OUL"/>
<dbReference type="PDBsum" id="6P18"/>
<dbReference type="PDBsum" id="6P19"/>
<dbReference type="PDBsum" id="6P1K"/>
<dbReference type="PDBsum" id="6PB4"/>
<dbReference type="PDBsum" id="6PB5"/>
<dbReference type="PDBsum" id="6PB6"/>
<dbReference type="PDBsum" id="6PMI"/>
<dbReference type="PDBsum" id="6PMJ"/>
<dbReference type="PDBsum" id="6PSQ"/>
<dbReference type="PDBsum" id="6PSR"/>
<dbReference type="PDBsum" id="6PSS"/>
<dbReference type="PDBsum" id="6PST"/>
<dbReference type="PDBsum" id="6PSU"/>
<dbReference type="PDBsum" id="6PSV"/>
<dbReference type="PDBsum" id="6PSW"/>
<dbReference type="PDBsum" id="6R9B"/>
<dbReference type="PDBsum" id="6R9G"/>
<dbReference type="PDBsum" id="6RH3"/>
<dbReference type="PDBsum" id="6RI7"/>
<dbReference type="PDBsum" id="6RI9"/>
<dbReference type="PDBsum" id="6RIN"/>
<dbReference type="PDBsum" id="6RIP"/>
<dbReference type="PDBsum" id="6TQN"/>
<dbReference type="PDBsum" id="6TQO"/>
<dbReference type="PDBsum" id="6UTW"/>
<dbReference type="PDBsum" id="6UTX"/>
<dbReference type="PDBsum" id="6UTY"/>
<dbReference type="PDBsum" id="6UTZ"/>
<dbReference type="PDBsum" id="6UU0"/>
<dbReference type="PDBsum" id="6UU1"/>
<dbReference type="PDBsum" id="6UU2"/>
<dbReference type="PDBsum" id="6UU3"/>
<dbReference type="PDBsum" id="6UU4"/>
<dbReference type="PDBsum" id="6UU5"/>
<dbReference type="PDBsum" id="6UU6"/>
<dbReference type="PDBsum" id="6UU7"/>
<dbReference type="PDBsum" id="6UU8"/>
<dbReference type="PDBsum" id="6UU9"/>
<dbReference type="PDBsum" id="6UUA"/>
<dbReference type="PDBsum" id="6UUB"/>
<dbReference type="PDBsum" id="6UUC"/>
<dbReference type="PDBsum" id="6VJS"/>
<dbReference type="PDBsum" id="6VU3"/>
<dbReference type="PDBsum" id="6VYQ"/>
<dbReference type="PDBsum" id="6VYR"/>
<dbReference type="PDBsum" id="6VYS"/>
<dbReference type="PDBsum" id="6VYT"/>
<dbReference type="PDBsum" id="6VYU"/>
<dbReference type="PDBsum" id="6VYW"/>
<dbReference type="PDBsum" id="6VYX"/>
<dbReference type="PDBsum" id="6VYY"/>
<dbReference type="PDBsum" id="6VYZ"/>
<dbReference type="PDBsum" id="6VZ2"/>
<dbReference type="PDBsum" id="6VZ3"/>
<dbReference type="PDBsum" id="6VZ5"/>
<dbReference type="PDBsum" id="6VZ7"/>
<dbReference type="PDBsum" id="6VZJ"/>
<dbReference type="PDBsum" id="6WMU"/>
<dbReference type="PDBsum" id="6X26"/>
<dbReference type="PDBsum" id="6X2F"/>
<dbReference type="PDBsum" id="6X2N"/>
<dbReference type="PDBsum" id="6X43"/>
<dbReference type="PDBsum" id="6X4W"/>
<dbReference type="PDBsum" id="6X4Y"/>
<dbReference type="PDBsum" id="6X50"/>
<dbReference type="PDBsum" id="6X6T"/>
<dbReference type="PDBsum" id="6X7F"/>
<dbReference type="PDBsum" id="6X7K"/>
<dbReference type="PDBsum" id="6X9Q"/>
<dbReference type="PDBsum" id="6XAS"/>
<dbReference type="PDBsum" id="6XAV"/>
<dbReference type="PDBsum" id="6XDQ"/>
<dbReference type="PDBsum" id="6XDR"/>
<dbReference type="PDBsum" id="6XGF"/>
<dbReference type="PDBsum" id="6XH7"/>
<dbReference type="PDBsum" id="6XH8"/>
<dbReference type="PDBsum" id="6XII"/>
<dbReference type="PDBsum" id="6XIJ"/>
<dbReference type="PDBsum" id="6XL5"/>
<dbReference type="PDBsum" id="6XL9"/>
<dbReference type="PDBsum" id="6XLJ"/>
<dbReference type="PDBsum" id="6XLL"/>
<dbReference type="PDBsum" id="6XLM"/>
<dbReference type="PDBsum" id="6XLN"/>
<dbReference type="PDBsum" id="6Z9P"/>
<dbReference type="PDBsum" id="6Z9Q"/>
<dbReference type="PDBsum" id="6Z9R"/>
<dbReference type="PDBsum" id="6Z9S"/>
<dbReference type="PDBsum" id="6Z9T"/>
<dbReference type="PDBsum" id="6ZTJ"/>
<dbReference type="PDBsum" id="6ZTL"/>
<dbReference type="PDBsum" id="6ZTM"/>
<dbReference type="PDBsum" id="6ZTN"/>
<dbReference type="PDBsum" id="6ZTO"/>
<dbReference type="PDBsum" id="6ZTP"/>
<dbReference type="PDBsum" id="6ZU1"/>
<dbReference type="PDBsum" id="7ADB"/>
<dbReference type="PDBsum" id="7ADC"/>
<dbReference type="PDBsum" id="7ADD"/>
<dbReference type="PDBsum" id="7ADE"/>
<dbReference type="PDBsum" id="7BEF"/>
<dbReference type="PDBsum" id="7BEG"/>
<dbReference type="PDBsum" id="7C17"/>
<dbReference type="PDBsum" id="7C97"/>
<dbReference type="PDBsum" id="7CHW"/>
<dbReference type="PDBsum" id="7DY6"/>
<dbReference type="PDBsum" id="7KHB"/>
<dbReference type="PDBsum" id="7KHC"/>
<dbReference type="PDBsum" id="7KHE"/>
<dbReference type="PDBsum" id="7KHI"/>
<dbReference type="PDBsum" id="7M8E"/>
<dbReference type="PDBsum" id="7MKD"/>
<dbReference type="PDBsum" id="7MKE"/>
<dbReference type="PDBsum" id="7MKI"/>
<dbReference type="PDBsum" id="7MKJ"/>
<dbReference type="PDBsum" id="7MKN"/>
<dbReference type="PDBsum" id="7MKO"/>
<dbReference type="PDBsum" id="7MKP"/>
<dbReference type="PDBsum" id="7MKQ"/>
<dbReference type="PDBsum" id="7N4E"/>
<dbReference type="PDBsum" id="7PY0"/>
<dbReference type="PDBsum" id="7PY1"/>
<dbReference type="PDBsum" id="7PY3"/>
<dbReference type="PDBsum" id="7PY5"/>
<dbReference type="PDBsum" id="7PY6"/>
<dbReference type="PDBsum" id="7PY7"/>
<dbReference type="PDBsum" id="7PY8"/>
<dbReference type="PDBsum" id="7PYJ"/>
<dbReference type="PDBsum" id="7PYK"/>
<dbReference type="PDBsum" id="7Q0J"/>
<dbReference type="PDBsum" id="7Q0K"/>
<dbReference type="PDBsum" id="7QV9"/>
<dbReference type="PDBsum" id="7QWP"/>
<dbReference type="PDBsum" id="7QXI"/>
<dbReference type="PDBsum" id="7SZJ"/>
<dbReference type="PDBsum" id="7SZK"/>
<dbReference type="PDBsum" id="7UBM"/>
<dbReference type="PDBsum" id="7UBN"/>
<dbReference type="PDBsum" id="7UWE"/>
<dbReference type="PDBsum" id="7UWH"/>
<dbReference type="PDBsum" id="7VWY"/>
<dbReference type="PDBsum" id="7VWZ"/>
<dbReference type="PDBsum" id="7W5W"/>
<dbReference type="PDBsum" id="7W5X"/>
<dbReference type="PDBsum" id="7W5Y"/>
<dbReference type="PDBsum" id="7XUE"/>
<dbReference type="PDBsum" id="7XUG"/>
<dbReference type="PDBsum" id="7XUI"/>
<dbReference type="PDBsum" id="7YP9"/>
<dbReference type="PDBsum" id="7YPA"/>
<dbReference type="PDBsum" id="7YPB"/>
<dbReference type="PDBsum" id="8ABY"/>
<dbReference type="PDBsum" id="8ABZ"/>
<dbReference type="PDBsum" id="8AC0"/>
<dbReference type="PDBsum" id="8AC1"/>
<dbReference type="PDBsum" id="8AC2"/>
<dbReference type="PDBsum" id="8ACP"/>
<dbReference type="PDBsum" id="8AD1"/>
<dbReference type="PDBsum" id="8E3F"/>
<dbReference type="PDBsum" id="8E5K"/>
<dbReference type="PDBsum" id="8E5O"/>
<dbReference type="PDBsum" id="8E6X"/>
<dbReference type="PDBsum" id="8E6Z"/>
<dbReference type="PDBsum" id="8EG7"/>
<dbReference type="PDBsum" id="8EG8"/>
<dbReference type="PDBsum" id="8EGB"/>
<dbReference type="PDBsum" id="8EH8"/>
<dbReference type="PDBsum" id="8EH9"/>
<dbReference type="PDBsum" id="8EHA"/>
<dbReference type="PDBsum" id="8EHF"/>
<dbReference type="PDBsum" id="8EHI"/>
<dbReference type="PDBsum" id="8F1I"/>
<dbReference type="PDBsum" id="8F1J"/>
<dbReference type="PDBsum" id="8F1K"/>
<dbReference type="PDBsum" id="8F3C"/>
<dbReference type="PDBsum" id="8FIX"/>
<dbReference type="PDBsum" id="8FIY"/>
<dbReference type="PDBsum" id="8FTD"/>
<dbReference type="PDBsum" id="8FVR"/>
<dbReference type="PDBsum" id="8FVW"/>
<dbReference type="PDBsum" id="8G00"/>
<dbReference type="PDBsum" id="8G1S"/>
<dbReference type="PDBsum" id="8G2W"/>
<dbReference type="PDBsum" id="8G4W"/>
<dbReference type="PDBsum" id="8G7E"/>
<dbReference type="PDBsum" id="8G8Z"/>
<dbReference type="PDBsum" id="8HKC"/>
<dbReference type="PDBsum" id="8IGR"/>
<dbReference type="PDBsum" id="8IGS"/>
<dbReference type="PDBsum" id="8JO2"/>
<dbReference type="PDBsum" id="8K58"/>
<dbReference type="PDBsum" id="8K59"/>
<dbReference type="PDBsum" id="8K5A"/>
<dbReference type="PDBsum" id="8PBL"/>
<dbReference type="PDBsum" id="8PDY"/>
<dbReference type="PDBsum" id="8PEN"/>
<dbReference type="PDBsum" id="8PFG"/>
<dbReference type="PDBsum" id="8PFJ"/>
<dbReference type="PDBsum" id="8PH9"/>
<dbReference type="PDBsum" id="8PHK"/>
<dbReference type="PDBsum" id="8PIB"/>
<dbReference type="PDBsum" id="8PID"/>
<dbReference type="PDBsum" id="8PIL"/>
<dbReference type="PDBsum" id="8PIM"/>
<dbReference type="PDBsum" id="8RE4"/>
<dbReference type="PDBsum" id="8REA"/>
<dbReference type="PDBsum" id="8REB"/>
<dbReference type="PDBsum" id="8REC"/>
<dbReference type="PDBsum" id="8RED"/>
<dbReference type="PDBsum" id="8REE"/>
<dbReference type="PDBsum" id="8SY5"/>
<dbReference type="PDBsum" id="8SY6"/>
<dbReference type="PDBsum" id="8SY7"/>
<dbReference type="PDBsum" id="8TO1"/>
<dbReference type="PDBsum" id="8TO6"/>
<dbReference type="PDBsum" id="8TO8"/>
<dbReference type="PDBsum" id="8TOE"/>
<dbReference type="PDBsum" id="8TOM"/>
<dbReference type="PDBsum" id="8TXO"/>
<dbReference type="PDBsum" id="8U3B"/>
<dbReference type="PDBsum" id="8UPO"/>
<dbReference type="PDBsum" id="8UPR"/>
<dbReference type="PDBsum" id="8UQL"/>
<dbReference type="PDBsum" id="8UQM"/>
<dbReference type="PDBsum" id="8UQP"/>
<dbReference type="PDBsum" id="8UR0"/>
<dbReference type="PDBsum" id="8URH"/>
<dbReference type="PDBsum" id="8URI"/>
<dbReference type="PDBsum" id="8URX"/>
<dbReference type="PDBsum" id="8URY"/>
<dbReference type="PDBsum" id="8Y6U"/>
<dbReference type="PDBsum" id="9DR1"/>
<dbReference type="PDBsum" id="9GUW"/>
<dbReference type="PDBsum" id="9GUX"/>
<dbReference type="PDBsum" id="9Q96"/>
<dbReference type="EMDB" id="EMD-0001"/>
<dbReference type="EMDB" id="EMD-0002"/>
<dbReference type="EMDB" id="EMD-0340"/>
<dbReference type="EMDB" id="EMD-0348"/>
<dbReference type="EMDB" id="EMD-0349"/>
<dbReference type="EMDB" id="EMD-0700"/>
<dbReference type="EMDB" id="EMD-0874"/>
<dbReference type="EMDB" id="EMD-11418"/>
<dbReference type="EMDB" id="EMD-11419"/>
<dbReference type="EMDB" id="EMD-11420"/>
<dbReference type="EMDB" id="EMD-11421"/>
<dbReference type="EMDB" id="EMD-11422"/>
<dbReference type="EMDB" id="EMD-11423"/>
<dbReference type="EMDB" id="EMD-11426"/>
<dbReference type="EMDB" id="EMD-11722"/>
<dbReference type="EMDB" id="EMD-11723"/>
<dbReference type="EMDB" id="EMD-11724"/>
<dbReference type="EMDB" id="EMD-11725"/>
<dbReference type="EMDB" id="EMD-12156"/>
<dbReference type="EMDB" id="EMD-12157"/>
<dbReference type="EMDB" id="EMD-13706"/>
<dbReference type="EMDB" id="EMD-13707"/>
<dbReference type="EMDB" id="EMD-13709"/>
<dbReference type="EMDB" id="EMD-13713"/>
<dbReference type="EMDB" id="EMD-13714"/>
<dbReference type="EMDB" id="EMD-13715"/>
<dbReference type="EMDB" id="EMD-13716"/>
<dbReference type="EMDB" id="EMD-13717"/>
<dbReference type="EMDB" id="EMD-13718"/>
<dbReference type="EMDB" id="EMD-13745"/>
<dbReference type="EMDB" id="EMD-13746"/>
<dbReference type="EMDB" id="EMD-14171"/>
<dbReference type="EMDB" id="EMD-14190"/>
<dbReference type="EMDB" id="EMD-14200"/>
<dbReference type="EMDB" id="EMD-15327"/>
<dbReference type="EMDB" id="EMD-15328"/>
<dbReference type="EMDB" id="EMD-15329"/>
<dbReference type="EMDB" id="EMD-15330"/>
<dbReference type="EMDB" id="EMD-15331"/>
<dbReference type="EMDB" id="EMD-15352"/>
<dbReference type="EMDB" id="EMD-15357"/>
<dbReference type="EMDB" id="EMD-17626"/>
<dbReference type="EMDB" id="EMD-17632"/>
<dbReference type="EMDB" id="EMD-17646"/>
<dbReference type="EMDB" id="EMD-17647"/>
<dbReference type="EMDB" id="EMD-17657"/>
<dbReference type="EMDB" id="EMD-17668"/>
<dbReference type="EMDB" id="EMD-17679"/>
<dbReference type="EMDB" id="EMD-17681"/>
<dbReference type="EMDB" id="EMD-17685"/>
<dbReference type="EMDB" id="EMD-17686"/>
<dbReference type="EMDB" id="EMD-19079"/>
<dbReference type="EMDB" id="EMD-19080"/>
<dbReference type="EMDB" id="EMD-19081"/>
<dbReference type="EMDB" id="EMD-19082"/>
<dbReference type="EMDB" id="EMD-19083"/>
<dbReference type="EMDB" id="EMD-19084"/>
<dbReference type="EMDB" id="EMD-20090"/>
<dbReference type="EMDB" id="EMD-20233"/>
<dbReference type="EMDB" id="EMD-20234"/>
<dbReference type="EMDB" id="EMD-20460"/>
<dbReference type="EMDB" id="EMD-20461"/>
<dbReference type="EMDB" id="EMD-20462"/>
<dbReference type="EMDB" id="EMD-20463"/>
<dbReference type="EMDB" id="EMD-20464"/>
<dbReference type="EMDB" id="EMD-20465"/>
<dbReference type="EMDB" id="EMD-20466"/>
<dbReference type="EMDB" id="EMD-21879"/>
<dbReference type="EMDB" id="EMD-21881"/>
<dbReference type="EMDB" id="EMD-21883"/>
<dbReference type="EMDB" id="EMD-22114"/>
<dbReference type="EMDB" id="EMD-22115"/>
<dbReference type="EMDB" id="EMD-25570"/>
<dbReference type="EMDB" id="EMD-25571"/>
<dbReference type="EMDB" id="EMD-26438"/>
<dbReference type="EMDB" id="EMD-26439"/>
<dbReference type="EMDB" id="EMD-26830"/>
<dbReference type="EMDB" id="EMD-26832"/>
<dbReference type="EMDB" id="EMD-27864"/>
<dbReference type="EMDB" id="EMD-27913"/>
<dbReference type="EMDB" id="EMD-27916"/>
<dbReference type="EMDB" id="EMD-27930"/>
<dbReference type="EMDB" id="EMD-27931"/>
<dbReference type="EMDB" id="EMD-28783"/>
<dbReference type="EMDB" id="EMD-28786"/>
<dbReference type="EMDB" id="EMD-28792"/>
<dbReference type="EMDB" id="EMD-29212"/>
<dbReference type="EMDB" id="EMD-29213"/>
<dbReference type="EMDB" id="EMD-29423"/>
<dbReference type="EMDB" id="EMD-29491"/>
<dbReference type="EMDB" id="EMD-29494"/>
<dbReference type="EMDB" id="EMD-30268"/>
<dbReference type="EMDB" id="EMD-32165"/>
<dbReference type="EMDB" id="EMD-32166"/>
<dbReference type="EMDB" id="EMD-32322"/>
<dbReference type="EMDB" id="EMD-32323"/>
<dbReference type="EMDB" id="EMD-32324"/>
<dbReference type="EMDB" id="EMD-33466"/>
<dbReference type="EMDB" id="EMD-33468"/>
<dbReference type="EMDB" id="EMD-33470"/>
<dbReference type="EMDB" id="EMD-33996"/>
<dbReference type="EMDB" id="EMD-33997"/>
<dbReference type="EMDB" id="EMD-33998"/>
<dbReference type="EMDB" id="EMD-34849"/>
<dbReference type="EMDB" id="EMD-35438"/>
<dbReference type="EMDB" id="EMD-35439"/>
<dbReference type="EMDB" id="EMD-3561"/>
<dbReference type="EMDB" id="EMD-3580"/>
<dbReference type="EMDB" id="EMD-36453"/>
<dbReference type="EMDB" id="EMD-36897"/>
<dbReference type="EMDB" id="EMD-36898"/>
<dbReference type="EMDB" id="EMD-36899"/>
<dbReference type="EMDB" id="EMD-3695"/>
<dbReference type="EMDB" id="EMD-3696"/>
<dbReference type="EMDB" id="EMD-39001"/>
<dbReference type="EMDB" id="EMD-40862"/>
<dbReference type="EMDB" id="EMD-40863"/>
<dbReference type="EMDB" id="EMD-40864"/>
<dbReference type="EMDB" id="EMD-41433"/>
<dbReference type="EMDB" id="EMD-41437"/>
<dbReference type="EMDB" id="EMD-41439"/>
<dbReference type="EMDB" id="EMD-41448"/>
<dbReference type="EMDB" id="EMD-41456"/>
<dbReference type="EMDB" id="EMD-41695"/>
<dbReference type="EMDB" id="EMD-41856"/>
<dbReference type="EMDB" id="EMD-42453"/>
<dbReference type="EMDB" id="EMD-42454"/>
<dbReference type="EMDB" id="EMD-42473"/>
<dbReference type="EMDB" id="EMD-42474"/>
<dbReference type="EMDB" id="EMD-42477"/>
<dbReference type="EMDB" id="EMD-42479"/>
<dbReference type="EMDB" id="EMD-42492"/>
<dbReference type="EMDB" id="EMD-42493"/>
<dbReference type="EMDB" id="EMD-42503"/>
<dbReference type="EMDB" id="EMD-42504"/>
<dbReference type="EMDB" id="EMD-4274"/>
<dbReference type="EMDB" id="EMD-4275"/>
<dbReference type="EMDB" id="EMD-4397"/>
<dbReference type="EMDB" id="EMD-4769"/>
<dbReference type="EMDB" id="EMD-4770"/>
<dbReference type="EMDB" id="EMD-4882"/>
<dbReference type="EMDB" id="EMD-4885"/>
<dbReference type="EMDB" id="EMD-4886"/>
<dbReference type="EMDB" id="EMD-4892"/>
<dbReference type="EMDB" id="EMD-4893"/>
<dbReference type="EMDB" id="EMD-51617"/>
<dbReference type="EMDB" id="EMD-51622"/>
<dbReference type="EMDB" id="EMD-51623"/>
<dbReference type="EMDB" id="EMD-52919"/>
<dbReference type="EMDB" id="EMD-7002"/>
<dbReference type="EMDB" id="EMD-7103"/>
<dbReference type="EMDB" id="EMD-7349"/>
<dbReference type="EMDB" id="EMD-7350"/>
<dbReference type="EMDB" id="EMD-7351"/>
<dbReference type="EMDB" id="EMD-7438"/>
<dbReference type="EMDB" id="EMD-7439"/>
<dbReference type="EMDB" id="EMD-8584"/>
<dbReference type="EMDB" id="EMD-8586"/>
<dbReference type="EMDB" id="EMD-8732"/>
<dbReference type="EMDB" id="EMD-9792"/>
<dbReference type="EMDB" id="EMD-9852"/>
<dbReference type="EMDB" id="EMD-9916"/>
<dbReference type="SMR" id="P0A7Z4"/>
<dbReference type="BioGRID" id="4263398">
    <property type="interactions" value="135"/>
</dbReference>
<dbReference type="BioGRID" id="852106">
    <property type="interactions" value="1"/>
</dbReference>
<dbReference type="ComplexPortal" id="CPX-4881">
    <property type="entry name" value="DNA-directed RNA polymerase holoenzyme complex, Sigma70 variant"/>
</dbReference>
<dbReference type="ComplexPortal" id="CPX-4883">
    <property type="entry name" value="DNA-directed RNA polymerase holoenzyme complex, SigmaS variant"/>
</dbReference>
<dbReference type="ComplexPortal" id="CPX-4884">
    <property type="entry name" value="DNA-directed RNA polymerase holoenzyme complex, Sigma54 variant"/>
</dbReference>
<dbReference type="ComplexPortal" id="CPX-4885">
    <property type="entry name" value="DNA-directed RNA polymerase holoenzyme complex, SigmaE variant"/>
</dbReference>
<dbReference type="ComplexPortal" id="CPX-4886">
    <property type="entry name" value="DNA-directed RNA polymerase holoenzyme complex, SigmaF variant"/>
</dbReference>
<dbReference type="ComplexPortal" id="CPX-4887">
    <property type="entry name" value="DNA-directed RNA polymerase holoenzyme complex, SigmaH variant"/>
</dbReference>
<dbReference type="ComplexPortal" id="CPX-4888">
    <property type="entry name" value="DNA-directed RNA polymerase holoenzyme complex, Sigma fecI variant"/>
</dbReference>
<dbReference type="ComplexPortal" id="CPX-5674">
    <property type="entry name" value="Transcription elongation complex"/>
</dbReference>
<dbReference type="ComplexPortal" id="CPX-5780">
    <property type="entry name" value="lambdaN-dependent processive transcription antitermination complex"/>
</dbReference>
<dbReference type="DIP" id="DIP-35879N"/>
<dbReference type="FunCoup" id="P0A7Z4">
    <property type="interactions" value="779"/>
</dbReference>
<dbReference type="IntAct" id="P0A7Z4">
    <property type="interactions" value="97"/>
</dbReference>
<dbReference type="MINT" id="P0A7Z4"/>
<dbReference type="STRING" id="511145.b3295"/>
<dbReference type="BindingDB" id="P0A7Z4"/>
<dbReference type="ChEMBL" id="CHEMBL2364672"/>
<dbReference type="ChEMBL" id="CHEMBL4296169"/>
<dbReference type="DrugBank" id="DB00615">
    <property type="generic name" value="Rifabutin"/>
</dbReference>
<dbReference type="DrugBank" id="DB11753">
    <property type="generic name" value="Rifamycin"/>
</dbReference>
<dbReference type="DrugCentral" id="P0A7Z4"/>
<dbReference type="iPTMnet" id="P0A7Z4"/>
<dbReference type="jPOST" id="P0A7Z4"/>
<dbReference type="PaxDb" id="511145-b3295"/>
<dbReference type="EnsemblBacteria" id="AAC76320">
    <property type="protein sequence ID" value="AAC76320"/>
    <property type="gene ID" value="b3295"/>
</dbReference>
<dbReference type="GeneID" id="93778692"/>
<dbReference type="GeneID" id="947794"/>
<dbReference type="KEGG" id="ecj:JW3257"/>
<dbReference type="KEGG" id="eco:b3295"/>
<dbReference type="KEGG" id="ecoc:C3026_17915"/>
<dbReference type="PATRIC" id="fig|1411691.4.peg.3436"/>
<dbReference type="EchoBASE" id="EB0886"/>
<dbReference type="eggNOG" id="COG0202">
    <property type="taxonomic scope" value="Bacteria"/>
</dbReference>
<dbReference type="HOGENOM" id="CLU_053084_0_0_6"/>
<dbReference type="InParanoid" id="P0A7Z4"/>
<dbReference type="OMA" id="PIKNVKY"/>
<dbReference type="OrthoDB" id="9805706at2"/>
<dbReference type="PhylomeDB" id="P0A7Z4"/>
<dbReference type="BioCyc" id="EcoCyc:EG10893-MONOMER"/>
<dbReference type="BioCyc" id="MetaCyc:EG10893-MONOMER"/>
<dbReference type="BRENDA" id="2.7.7.6">
    <property type="organism ID" value="2026"/>
</dbReference>
<dbReference type="EvolutionaryTrace" id="P0A7Z4"/>
<dbReference type="PRO" id="PR:P0A7Z4"/>
<dbReference type="Proteomes" id="UP000000625">
    <property type="component" value="Chromosome"/>
</dbReference>
<dbReference type="GO" id="GO:0005737">
    <property type="term" value="C:cytoplasm"/>
    <property type="evidence" value="ECO:0007005"/>
    <property type="project" value="UniProtKB"/>
</dbReference>
<dbReference type="GO" id="GO:0005829">
    <property type="term" value="C:cytosol"/>
    <property type="evidence" value="ECO:0000314"/>
    <property type="project" value="EcoCyc"/>
</dbReference>
<dbReference type="GO" id="GO:0000345">
    <property type="term" value="C:cytosolic DNA-directed RNA polymerase complex"/>
    <property type="evidence" value="ECO:0000353"/>
    <property type="project" value="ComplexPortal"/>
</dbReference>
<dbReference type="GO" id="GO:0016020">
    <property type="term" value="C:membrane"/>
    <property type="evidence" value="ECO:0007005"/>
    <property type="project" value="UniProtKB"/>
</dbReference>
<dbReference type="GO" id="GO:0008023">
    <property type="term" value="C:transcription elongation factor complex"/>
    <property type="evidence" value="ECO:0000303"/>
    <property type="project" value="ComplexPortal"/>
</dbReference>
<dbReference type="GO" id="GO:0003677">
    <property type="term" value="F:DNA binding"/>
    <property type="evidence" value="ECO:0007669"/>
    <property type="project" value="UniProtKB-UniRule"/>
</dbReference>
<dbReference type="GO" id="GO:0003899">
    <property type="term" value="F:DNA-directed RNA polymerase activity"/>
    <property type="evidence" value="ECO:0007669"/>
    <property type="project" value="UniProtKB-UniRule"/>
</dbReference>
<dbReference type="GO" id="GO:0046983">
    <property type="term" value="F:protein dimerization activity"/>
    <property type="evidence" value="ECO:0007669"/>
    <property type="project" value="InterPro"/>
</dbReference>
<dbReference type="GO" id="GO:0044780">
    <property type="term" value="P:bacterial-type flagellum assembly"/>
    <property type="evidence" value="ECO:0000303"/>
    <property type="project" value="ComplexPortal"/>
</dbReference>
<dbReference type="GO" id="GO:0071973">
    <property type="term" value="P:bacterial-type flagellum-dependent cell motility"/>
    <property type="evidence" value="ECO:0000303"/>
    <property type="project" value="ComplexPortal"/>
</dbReference>
<dbReference type="GO" id="GO:0048870">
    <property type="term" value="P:cell motility"/>
    <property type="evidence" value="ECO:0000303"/>
    <property type="project" value="ComplexPortal"/>
</dbReference>
<dbReference type="GO" id="GO:0036460">
    <property type="term" value="P:cellular response to cell envelope stress"/>
    <property type="evidence" value="ECO:0000303"/>
    <property type="project" value="ComplexPortal"/>
</dbReference>
<dbReference type="GO" id="GO:0006352">
    <property type="term" value="P:DNA-templated transcription initiation"/>
    <property type="evidence" value="ECO:0000314"/>
    <property type="project" value="ComplexPortal"/>
</dbReference>
<dbReference type="GO" id="GO:0006879">
    <property type="term" value="P:intracellular iron ion homeostasis"/>
    <property type="evidence" value="ECO:0000303"/>
    <property type="project" value="ComplexPortal"/>
</dbReference>
<dbReference type="GO" id="GO:0042128">
    <property type="term" value="P:nitrate assimilation"/>
    <property type="evidence" value="ECO:0000303"/>
    <property type="project" value="ComplexPortal"/>
</dbReference>
<dbReference type="GO" id="GO:0032784">
    <property type="term" value="P:regulation of DNA-templated transcription elongation"/>
    <property type="evidence" value="ECO:0000303"/>
    <property type="project" value="ComplexPortal"/>
</dbReference>
<dbReference type="GO" id="GO:2000142">
    <property type="term" value="P:regulation of DNA-templated transcription initiation"/>
    <property type="evidence" value="ECO:0000314"/>
    <property type="project" value="ComplexPortal"/>
</dbReference>
<dbReference type="GO" id="GO:0009408">
    <property type="term" value="P:response to heat"/>
    <property type="evidence" value="ECO:0000303"/>
    <property type="project" value="ComplexPortal"/>
</dbReference>
<dbReference type="GO" id="GO:0090605">
    <property type="term" value="P:submerged biofilm formation"/>
    <property type="evidence" value="ECO:0000303"/>
    <property type="project" value="ComplexPortal"/>
</dbReference>
<dbReference type="GO" id="GO:0031564">
    <property type="term" value="P:transcription antitermination"/>
    <property type="evidence" value="ECO:0000314"/>
    <property type="project" value="ComplexPortal"/>
</dbReference>
<dbReference type="CDD" id="cd06928">
    <property type="entry name" value="RNAP_alpha_NTD"/>
    <property type="match status" value="1"/>
</dbReference>
<dbReference type="FunFam" id="1.10.150.20:FF:000001">
    <property type="entry name" value="DNA-directed RNA polymerase subunit alpha"/>
    <property type="match status" value="1"/>
</dbReference>
<dbReference type="FunFam" id="2.170.120.12:FF:000001">
    <property type="entry name" value="DNA-directed RNA polymerase subunit alpha"/>
    <property type="match status" value="1"/>
</dbReference>
<dbReference type="Gene3D" id="1.10.150.20">
    <property type="entry name" value="5' to 3' exonuclease, C-terminal subdomain"/>
    <property type="match status" value="1"/>
</dbReference>
<dbReference type="Gene3D" id="2.170.120.12">
    <property type="entry name" value="DNA-directed RNA polymerase, insert domain"/>
    <property type="match status" value="1"/>
</dbReference>
<dbReference type="Gene3D" id="3.30.1360.10">
    <property type="entry name" value="RNA polymerase, RBP11-like subunit"/>
    <property type="match status" value="1"/>
</dbReference>
<dbReference type="HAMAP" id="MF_00059">
    <property type="entry name" value="RNApol_bact_RpoA"/>
    <property type="match status" value="1"/>
</dbReference>
<dbReference type="InterPro" id="IPR011262">
    <property type="entry name" value="DNA-dir_RNA_pol_insert"/>
</dbReference>
<dbReference type="InterPro" id="IPR011263">
    <property type="entry name" value="DNA-dir_RNA_pol_RpoA/D/Rpb3"/>
</dbReference>
<dbReference type="InterPro" id="IPR011773">
    <property type="entry name" value="DNA-dir_RpoA"/>
</dbReference>
<dbReference type="InterPro" id="IPR036603">
    <property type="entry name" value="RBP11-like"/>
</dbReference>
<dbReference type="InterPro" id="IPR011260">
    <property type="entry name" value="RNAP_asu_C"/>
</dbReference>
<dbReference type="InterPro" id="IPR036643">
    <property type="entry name" value="RNApol_insert_sf"/>
</dbReference>
<dbReference type="NCBIfam" id="NF003513">
    <property type="entry name" value="PRK05182.1-2"/>
    <property type="match status" value="1"/>
</dbReference>
<dbReference type="NCBIfam" id="NF003519">
    <property type="entry name" value="PRK05182.2-5"/>
    <property type="match status" value="1"/>
</dbReference>
<dbReference type="NCBIfam" id="TIGR02027">
    <property type="entry name" value="rpoA"/>
    <property type="match status" value="1"/>
</dbReference>
<dbReference type="Pfam" id="PF01000">
    <property type="entry name" value="RNA_pol_A_bac"/>
    <property type="match status" value="1"/>
</dbReference>
<dbReference type="Pfam" id="PF03118">
    <property type="entry name" value="RNA_pol_A_CTD"/>
    <property type="match status" value="1"/>
</dbReference>
<dbReference type="Pfam" id="PF01193">
    <property type="entry name" value="RNA_pol_L"/>
    <property type="match status" value="1"/>
</dbReference>
<dbReference type="SMART" id="SM00662">
    <property type="entry name" value="RPOLD"/>
    <property type="match status" value="1"/>
</dbReference>
<dbReference type="SUPFAM" id="SSF47789">
    <property type="entry name" value="C-terminal domain of RNA polymerase alpha subunit"/>
    <property type="match status" value="1"/>
</dbReference>
<dbReference type="SUPFAM" id="SSF56553">
    <property type="entry name" value="Insert subdomain of RNA polymerase alpha subunit"/>
    <property type="match status" value="1"/>
</dbReference>
<dbReference type="SUPFAM" id="SSF55257">
    <property type="entry name" value="RBP11-like subunits of RNA polymerase"/>
    <property type="match status" value="1"/>
</dbReference>
<protein>
    <recommendedName>
        <fullName>DNA-directed RNA polymerase subunit alpha</fullName>
        <shortName>RNAP subunit alpha</shortName>
        <ecNumber>2.7.7.6</ecNumber>
    </recommendedName>
    <alternativeName>
        <fullName>RNA polymerase subunit alpha</fullName>
    </alternativeName>
    <alternativeName>
        <fullName>Transcriptase subunit alpha</fullName>
    </alternativeName>
</protein>
<keyword id="KW-0002">3D-structure</keyword>
<keyword id="KW-0007">Acetylation</keyword>
<keyword id="KW-0013">ADP-ribosylation</keyword>
<keyword id="KW-0903">Direct protein sequencing</keyword>
<keyword id="KW-0240">DNA-directed RNA polymerase</keyword>
<keyword id="KW-0548">Nucleotidyltransferase</keyword>
<keyword id="KW-1185">Reference proteome</keyword>
<keyword id="KW-0804">Transcription</keyword>
<keyword id="KW-0808">Transferase</keyword>
<accession>P0A7Z4</accession>
<accession>P00574</accession>
<accession>Q2M6W0</accession>
<feature type="chain" id="PRO_0000175304" description="DNA-directed RNA polymerase subunit alpha">
    <location>
        <begin position="1"/>
        <end position="329"/>
    </location>
</feature>
<feature type="region of interest" description="Alpha N-terminal domain (alpha-NTD)">
    <location>
        <begin position="1"/>
        <end position="235"/>
    </location>
</feature>
<feature type="region of interest" description="Required for interaction with Crp at class II promoters">
    <location>
        <begin position="162"/>
        <end position="165"/>
    </location>
</feature>
<feature type="region of interest" description="Alpha C-terminal domain (alpha-CTD); not required for RNAP assembly or function">
    <location>
        <begin position="249"/>
        <end position="329"/>
    </location>
</feature>
<feature type="modified residue" description="ADP-ribosylarginine" evidence="10">
    <location>
        <position position="265"/>
    </location>
</feature>
<feature type="modified residue" description="N6-acetyllysine" evidence="6">
    <location>
        <position position="297"/>
    </location>
</feature>
<feature type="modified residue" description="N6-acetyllysine; by PatZ" evidence="6">
    <location>
        <position position="298"/>
    </location>
</feature>
<feature type="mutagenesis site" description="In rpoA112; temperature-sensitive, blocks RNA polymerase assembly." evidence="7">
    <original>R</original>
    <variation>C</variation>
    <location>
        <position position="45"/>
    </location>
</feature>
<feature type="mutagenesis site" description="5-fold decrease in CRP-class II promoter-dependent transcription." evidence="11">
    <original>EEDE</original>
    <variation>AAAA</variation>
    <location>
        <begin position="162"/>
        <end position="165"/>
    </location>
</feature>
<feature type="mutagenesis site" description="5-fold decrease in CRP-class II promoter-dependent transcription." evidence="11">
    <original>E</original>
    <variation>K</variation>
    <location>
        <position position="165"/>
    </location>
</feature>
<feature type="mutagenesis site" description="In rpoA101; temperature-sensitive." evidence="7">
    <original>R</original>
    <variation>C</variation>
    <location>
        <position position="191"/>
    </location>
</feature>
<feature type="sequence conflict" description="In Ref. 11; AA sequence." evidence="12" ref="11">
    <original>S</original>
    <variation>N</variation>
    <location>
        <position position="4"/>
    </location>
</feature>
<feature type="sequence conflict" description="In Ref. 4; CAA26395." evidence="12" ref="4">
    <original>N</original>
    <variation>T</variation>
    <location>
        <position position="208"/>
    </location>
</feature>
<feature type="strand" evidence="31">
    <location>
        <begin position="5"/>
        <end position="7"/>
    </location>
</feature>
<feature type="strand" evidence="28">
    <location>
        <begin position="12"/>
        <end position="18"/>
    </location>
</feature>
<feature type="strand" evidence="28">
    <location>
        <begin position="20"/>
        <end position="31"/>
    </location>
</feature>
<feature type="helix" evidence="28">
    <location>
        <begin position="35"/>
        <end position="50"/>
    </location>
</feature>
<feature type="strand" evidence="28">
    <location>
        <begin position="52"/>
        <end position="61"/>
    </location>
</feature>
<feature type="strand" evidence="28">
    <location>
        <begin position="67"/>
        <end position="69"/>
    </location>
</feature>
<feature type="strand" evidence="28">
    <location>
        <begin position="74"/>
        <end position="76"/>
    </location>
</feature>
<feature type="helix" evidence="28">
    <location>
        <begin position="78"/>
        <end position="86"/>
    </location>
</feature>
<feature type="strand" evidence="28">
    <location>
        <begin position="90"/>
        <end position="92"/>
    </location>
</feature>
<feature type="strand" evidence="28">
    <location>
        <begin position="96"/>
        <end position="111"/>
    </location>
</feature>
<feature type="helix" evidence="28">
    <location>
        <begin position="112"/>
        <end position="114"/>
    </location>
</feature>
<feature type="turn" evidence="29">
    <location>
        <begin position="118"/>
        <end position="120"/>
    </location>
</feature>
<feature type="strand" evidence="28">
    <location>
        <begin position="121"/>
        <end position="124"/>
    </location>
</feature>
<feature type="strand" evidence="28">
    <location>
        <begin position="129"/>
        <end position="133"/>
    </location>
</feature>
<feature type="strand" evidence="27">
    <location>
        <begin position="135"/>
        <end position="137"/>
    </location>
</feature>
<feature type="strand" evidence="28">
    <location>
        <begin position="139"/>
        <end position="153"/>
    </location>
</feature>
<feature type="helix" evidence="27">
    <location>
        <begin position="155"/>
        <end position="157"/>
    </location>
</feature>
<feature type="strand" evidence="22">
    <location>
        <begin position="159"/>
        <end position="161"/>
    </location>
</feature>
<feature type="strand" evidence="21">
    <location>
        <begin position="162"/>
        <end position="164"/>
    </location>
</feature>
<feature type="strand" evidence="30">
    <location>
        <begin position="167"/>
        <end position="169"/>
    </location>
</feature>
<feature type="strand" evidence="28">
    <location>
        <begin position="170"/>
        <end position="172"/>
    </location>
</feature>
<feature type="strand" evidence="26">
    <location>
        <begin position="175"/>
        <end position="177"/>
    </location>
</feature>
<feature type="strand" evidence="28">
    <location>
        <begin position="180"/>
        <end position="189"/>
    </location>
</feature>
<feature type="strand" evidence="32">
    <location>
        <begin position="192"/>
        <end position="194"/>
    </location>
</feature>
<feature type="strand" evidence="25">
    <location>
        <begin position="195"/>
        <end position="197"/>
    </location>
</feature>
<feature type="strand" evidence="28">
    <location>
        <begin position="199"/>
        <end position="207"/>
    </location>
</feature>
<feature type="strand" evidence="28">
    <location>
        <begin position="209"/>
        <end position="211"/>
    </location>
</feature>
<feature type="helix" evidence="28">
    <location>
        <begin position="213"/>
        <end position="232"/>
    </location>
</feature>
<feature type="helix" evidence="19">
    <location>
        <begin position="251"/>
        <end position="254"/>
    </location>
</feature>
<feature type="helix" evidence="19">
    <location>
        <begin position="257"/>
        <end position="260"/>
    </location>
</feature>
<feature type="helix" evidence="19">
    <location>
        <begin position="264"/>
        <end position="270"/>
    </location>
</feature>
<feature type="turn" evidence="20">
    <location>
        <begin position="271"/>
        <end position="274"/>
    </location>
</feature>
<feature type="helix" evidence="19">
    <location>
        <begin position="278"/>
        <end position="283"/>
    </location>
</feature>
<feature type="helix" evidence="19">
    <location>
        <begin position="286"/>
        <end position="290"/>
    </location>
</feature>
<feature type="strand" evidence="24">
    <location>
        <begin position="292"/>
        <end position="294"/>
    </location>
</feature>
<feature type="helix" evidence="18">
    <location>
        <begin position="297"/>
        <end position="299"/>
    </location>
</feature>
<feature type="helix" evidence="19">
    <location>
        <begin position="300"/>
        <end position="303"/>
    </location>
</feature>
<feature type="helix" evidence="19">
    <location>
        <begin position="308"/>
        <end position="310"/>
    </location>
</feature>
<feature type="turn" evidence="23">
    <location>
        <begin position="312"/>
        <end position="314"/>
    </location>
</feature>
<feature type="strand" evidence="19">
    <location>
        <begin position="318"/>
        <end position="322"/>
    </location>
</feature>
<reference key="1">
    <citation type="journal article" date="1977" name="FEBS Lett.">
        <title>Primary structure of alpha-subunit of DNA-dependent RNA polymerase from Escherichia coli.</title>
        <authorList>
            <person name="Ovchinnikov Y.A."/>
            <person name="Lipkin V.M."/>
            <person name="Modyanov N.N."/>
            <person name="Chertov O.Y."/>
            <person name="Smirnov Y.V."/>
        </authorList>
    </citation>
    <scope>PROTEIN SEQUENCE</scope>
</reference>
<reference key="2">
    <citation type="journal article" date="1978" name="Bioorg. Khim.">
        <title>The primary structure of alpha-subunit of DNA-dependent RNA polymerase from E. coli. V. The cyanogen bromide peptides.</title>
        <authorList>
            <person name="Modyanov N.N."/>
            <person name="Lipkin V.M."/>
            <person name="Smirnov Y.V."/>
            <person name="Shuvaeva T.M."/>
            <person name="Kocherginskaya S.A."/>
        </authorList>
    </citation>
    <scope>PROTEIN SEQUENCE</scope>
</reference>
<reference key="3">
    <citation type="journal article" date="1984" name="Nucleic Acids Res.">
        <title>Nucleotide sequence of the rpoA-rplQ DNA of Escherichia coli: a second regulatory binding site for protein S4?</title>
        <authorList>
            <person name="Meek D.W."/>
            <person name="Hayward R.S."/>
        </authorList>
    </citation>
    <scope>NUCLEOTIDE SEQUENCE [GENOMIC DNA]</scope>
</reference>
<reference key="4">
    <citation type="journal article" date="1985" name="Nucleic Acids Res.">
        <title>Nucleotide sequence of the alpha ribosomal protein operon of Escherichia coli.</title>
        <authorList>
            <person name="Bedwell D.M."/>
            <person name="Davis G.R."/>
            <person name="Gosink M."/>
            <person name="Post L.E."/>
            <person name="Nomura M."/>
            <person name="Kestler H."/>
            <person name="Zengel J.M."/>
            <person name="Lindahl L."/>
        </authorList>
    </citation>
    <scope>NUCLEOTIDE SEQUENCE [GENOMIC DNA]</scope>
    <source>
        <strain>K12</strain>
    </source>
</reference>
<reference key="5">
    <citation type="journal article" date="1990" name="Nucleic Acids Res.">
        <title>Sequence analysis of two temperature-sensitive mutations in the alpha subunit gene (rpoA) of Escherichia coli RNA polymerase.</title>
        <authorList>
            <person name="Igarashi K."/>
            <person name="Fujita N."/>
            <person name="Ishihama A."/>
        </authorList>
    </citation>
    <scope>NUCLEOTIDE SEQUENCE [GENOMIC DNA]</scope>
    <scope>DOMAIN</scope>
    <scope>SUBUNIT</scope>
    <scope>MUTAGENESIS OF ARG-45 AND ARG-191</scope>
    <source>
        <strain>K12</strain>
    </source>
</reference>
<reference key="6">
    <citation type="journal article" date="1997" name="Science">
        <title>The complete genome sequence of Escherichia coli K-12.</title>
        <authorList>
            <person name="Blattner F.R."/>
            <person name="Plunkett G. III"/>
            <person name="Bloch C.A."/>
            <person name="Perna N.T."/>
            <person name="Burland V."/>
            <person name="Riley M."/>
            <person name="Collado-Vides J."/>
            <person name="Glasner J.D."/>
            <person name="Rode C.K."/>
            <person name="Mayhew G.F."/>
            <person name="Gregor J."/>
            <person name="Davis N.W."/>
            <person name="Kirkpatrick H.A."/>
            <person name="Goeden M.A."/>
            <person name="Rose D.J."/>
            <person name="Mau B."/>
            <person name="Shao Y."/>
        </authorList>
    </citation>
    <scope>NUCLEOTIDE SEQUENCE [LARGE SCALE GENOMIC DNA]</scope>
    <source>
        <strain>K12 / MG1655 / ATCC 47076</strain>
    </source>
</reference>
<reference key="7">
    <citation type="journal article" date="2006" name="Mol. Syst. Biol.">
        <title>Highly accurate genome sequences of Escherichia coli K-12 strains MG1655 and W3110.</title>
        <authorList>
            <person name="Hayashi K."/>
            <person name="Morooka N."/>
            <person name="Yamamoto Y."/>
            <person name="Fujita K."/>
            <person name="Isono K."/>
            <person name="Choi S."/>
            <person name="Ohtsubo E."/>
            <person name="Baba T."/>
            <person name="Wanner B.L."/>
            <person name="Mori H."/>
            <person name="Horiuchi T."/>
        </authorList>
    </citation>
    <scope>NUCLEOTIDE SEQUENCE [LARGE SCALE GENOMIC DNA]</scope>
    <source>
        <strain>K12 / W3110 / ATCC 27325 / DSM 5911</strain>
    </source>
</reference>
<reference key="8">
    <citation type="journal article" date="1979" name="J. Biol. Chem.">
        <title>Nucleotide sequence of the intercistronic region preceding the gene for RNA polymerase subunit alpha in Escherichia coli.</title>
        <authorList>
            <person name="Post L.E."/>
            <person name="Nomura M."/>
        </authorList>
    </citation>
    <scope>NUCLEOTIDE SEQUENCE [GENOMIC DNA] OF 1-159</scope>
</reference>
<reference key="9">
    <citation type="journal article" date="1997" name="Electrophoresis">
        <title>Comparing the predicted and observed properties of proteins encoded in the genome of Escherichia coli K-12.</title>
        <authorList>
            <person name="Link A.J."/>
            <person name="Robison K."/>
            <person name="Church G.M."/>
        </authorList>
    </citation>
    <scope>PROTEIN SEQUENCE OF 1-19</scope>
    <source>
        <strain>K12 / EMG2</strain>
    </source>
</reference>
<reference key="10">
    <citation type="journal article" date="1985" name="Mol. Gen. Genet.">
        <title>Unstable mutations caused by regional tandem multiplications in the gene for ribosomal protein S4 show thermosensitivity in Escherichia coli.</title>
        <authorList>
            <person name="Schnier J."/>
            <person name="Isono S."/>
            <person name="Cumberlidge A.G."/>
            <person name="Isono K."/>
        </authorList>
    </citation>
    <scope>NUCLEOTIDE SEQUENCE [GENOMIC DNA] OF 1-12</scope>
    <source>
        <strain>K12</strain>
    </source>
</reference>
<reference key="11">
    <citation type="journal article" date="1975" name="FEBS Lett.">
        <title>The subunits of DNA-dependent RNA polymerase from E. coli: I. Amino acid analysis and primary structure of the N-terminal regions.</title>
        <authorList>
            <person name="Fujiki H."/>
            <person name="Zurek G."/>
        </authorList>
    </citation>
    <scope>PROTEIN SEQUENCE OF 1-4</scope>
    <source>
        <strain>K12</strain>
    </source>
</reference>
<reference key="12">
    <citation type="journal article" date="1997" name="Electrophoresis">
        <title>Escherichia coli proteome analysis using the gene-protein database.</title>
        <authorList>
            <person name="VanBogelen R.A."/>
            <person name="Abshire K.Z."/>
            <person name="Moldover B."/>
            <person name="Olson E.R."/>
            <person name="Neidhardt F.C."/>
        </authorList>
    </citation>
    <scope>IDENTIFICATION BY 2D-GEL</scope>
</reference>
<reference key="13">
    <citation type="journal article" date="1991" name="Cell">
        <title>Bipartite functional map of the E. coli RNA polymerase alpha subunit: involvement of the C-terminal region in transcription activation by cAMP-CRP.</title>
        <authorList>
            <person name="Igarashi K."/>
            <person name="Ishihama A."/>
        </authorList>
    </citation>
    <scope>FUNCTION IN TRANSCRIPTION</scope>
    <scope>PROBABLE INTERACTION WITH CRP</scope>
    <scope>SUBUNIT</scope>
    <scope>DOMAIN</scope>
</reference>
<reference key="14">
    <citation type="journal article" date="1996" name="Cell">
        <title>Transcription activation at class II CAP-dependent promoters: two interactions between CAP and RNA polymerase.</title>
        <authorList>
            <person name="Niu W."/>
            <person name="Kim Y."/>
            <person name="Tau G."/>
            <person name="Heyduk T."/>
            <person name="Ebright R.H."/>
        </authorList>
    </citation>
    <scope>INTERACTION WITH CRP</scope>
    <scope>MUTAGENESIS OF 162-GLU--GLU-165 AND GLU-165</scope>
</reference>
<reference key="15">
    <citation type="journal article" date="1974" name="J. Biol. Chem.">
        <title>Chemical structure of a modification of the Escherichia coli ribonucleic acid polymerase alpha polypeptides induced by bacteriophage T4 infection.</title>
        <authorList>
            <person name="Goff C.G."/>
        </authorList>
    </citation>
    <scope>ADP-RIBOSYLATION AT ARG-265 (MICROBIAL INFECTION)</scope>
</reference>
<reference key="16">
    <citation type="journal article" date="1999" name="Gene Expr.">
        <title>Overexpression, purification, and partial characterization of ADP-ribosyltransferases modA and modB of bacteriophage T4.</title>
        <authorList>
            <person name="Tiemann B."/>
            <person name="Depping R."/>
            <person name="Rueger W."/>
        </authorList>
    </citation>
    <scope>ADP-RIBOSYLATION (MICROBIAL INFECTION)</scope>
</reference>
<reference key="17">
    <citation type="journal article" date="2004" name="J. Bacteriol.">
        <title>ModA and ModB, two ADP-ribosyltransferases encoded by bacteriophage T4: catalytic properties and mutation analysis.</title>
        <authorList>
            <person name="Tiemann B."/>
            <person name="Depping R."/>
            <person name="Gineikiene E."/>
            <person name="Kaliniene L."/>
            <person name="Nivinskas R."/>
            <person name="Ruger W."/>
        </authorList>
    </citation>
    <scope>ADP-RIBOSYLATION (MICROBIAL INFECTION)</scope>
</reference>
<reference key="18">
    <citation type="journal article" date="2011" name="Mol. Microbiol.">
        <title>Involvement of protein acetylation in glucose-induced transcription of a stress-responsive promoter.</title>
        <authorList>
            <person name="Lima B.P."/>
            <person name="Antelmann H."/>
            <person name="Gronau K."/>
            <person name="Chi B.K."/>
            <person name="Becher D."/>
            <person name="Brinsmade S.R."/>
            <person name="Wolfe A.J."/>
        </authorList>
    </citation>
    <scope>ACETYLATION AT LYS-297 AND LYS-298</scope>
</reference>
<reference key="19">
    <citation type="journal article" date="1995" name="Science">
        <title>Solution structure of the activator contact domain of the RNA polymerase alpha subunit.</title>
        <authorList>
            <person name="Jeon Y.H."/>
            <person name="Negishi T."/>
            <person name="Shirakawa M."/>
            <person name="Yamazaki T."/>
            <person name="Fujita N."/>
            <person name="Ishihama A."/>
            <person name="Kyogoku Y."/>
        </authorList>
    </citation>
    <scope>STRUCTURE BY NMR OF 233-349</scope>
</reference>
<reference key="20">
    <citation type="journal article" date="1998" name="Science">
        <title>Structure of the Escherichia coli RNA polymerase alpha subunit amino-terminal domain.</title>
        <authorList>
            <person name="Zhang G."/>
            <person name="Darst S.A."/>
        </authorList>
    </citation>
    <scope>X-RAY CRYSTALLOGRAPHY (2.5 ANGSTROMS) OF 1-235</scope>
</reference>
<reference key="21">
    <citation type="journal article" date="2002" name="Science">
        <title>Structural basis of transcription activation: the CAP-alpha CTD-DNA complex.</title>
        <authorList>
            <person name="Benoff B."/>
            <person name="Yang H."/>
            <person name="Lawson C.L."/>
            <person name="Parkinson G."/>
            <person name="Liu J."/>
            <person name="Blatter E."/>
            <person name="Ebright Y.W."/>
            <person name="Berman H.M."/>
            <person name="Ebright R.H."/>
        </authorList>
    </citation>
    <scope>X-RAY CRYSTALLOGRAPHY (3.1 ANGSTROMS) OF 246-329 IN COMPLEX WITH DNA AND CRP</scope>
    <scope>INTERACTION WITH CRP</scope>
    <scope>DNA-BINDING</scope>
    <scope>SUBUNIT</scope>
</reference>
<reference evidence="13" key="22">
    <citation type="journal article" date="2009" name="Proc. Natl. Acad. Sci. U.S.A.">
        <title>Three-dimensional EM structure of an intact activator-dependent transcription initiation complex.</title>
        <authorList>
            <person name="Hudson B.P."/>
            <person name="Quispe J."/>
            <person name="Lara-Gonzalez S."/>
            <person name="Kim Y."/>
            <person name="Berman H.M."/>
            <person name="Arnold E."/>
            <person name="Ebright R.H."/>
            <person name="Lawson C.L."/>
        </authorList>
    </citation>
    <scope>STRUCTURE BY ELECTRON MICROSCOPY (19.80 ANGSTROMS) IN COMPLEX WITH RPOB; RPOC; RPOD; RPOZ; CRP AND DNA</scope>
    <scope>INTERACTION WITH CRP</scope>
    <scope>DNA-BINDING</scope>
    <scope>SUBUNIT</scope>
</reference>
<reference evidence="14 15" key="23">
    <citation type="journal article" date="2014" name="Elife">
        <title>Transcription inhibition by the depsipeptide antibiotic salinamide A.</title>
        <authorList>
            <person name="Degen D."/>
            <person name="Feng Y."/>
            <person name="Zhang Y."/>
            <person name="Ebright K.Y."/>
            <person name="Ebright Y.W."/>
            <person name="Gigliotti M."/>
            <person name="Vahedian-Movahed H."/>
            <person name="Mandal S."/>
            <person name="Talaue M."/>
            <person name="Connell N."/>
            <person name="Arnold E."/>
            <person name="Fenical W."/>
            <person name="Ebright R.H."/>
        </authorList>
    </citation>
    <scope>X-RAY CRYSTALLOGRAPHY (3.90 ANGSTROMS) OF 2-329 IN COMPLEX WITH RPOB; RPOC; RPOD; RPOZ AND SALINAMIDE A</scope>
    <scope>FUNCTION</scope>
    <scope>SUBUNIT</scope>
</reference>
<reference evidence="16 17" key="24">
    <citation type="journal article" date="2020" name="Mol. Cell">
        <title>Structure-Based Mechanisms of a Molecular RNA Polymerase/Chaperone Machine Required for Ribosome Biosynthesis.</title>
        <authorList>
            <person name="Huang Y.H."/>
            <person name="Hilal T."/>
            <person name="Loll B."/>
            <person name="Buerger J."/>
            <person name="Mielke T."/>
            <person name="Boettcher C."/>
            <person name="Said N."/>
            <person name="Wahl M.C."/>
        </authorList>
    </citation>
    <scope>STRUCTURE BY ELECTRON MICROSCOPY (3.80 ANGSTROMS) OF RRNA TRANSCRIPTION-ELONGATION-ANTITERMINATION COMPLEXES WITH AND WITHOUT S4</scope>
    <scope>FUNCTION</scope>
    <scope>SUBUNIT</scope>
</reference>